<organism>
    <name type="scientific">Bat coronavirus 279/2005</name>
    <name type="common">BtCoV</name>
    <name type="synonym">BtCoV/279/2005</name>
    <dbReference type="NCBI Taxonomy" id="389167"/>
    <lineage>
        <taxon>Viruses</taxon>
        <taxon>Riboviria</taxon>
        <taxon>Orthornavirae</taxon>
        <taxon>Pisuviricota</taxon>
        <taxon>Pisoniviricetes</taxon>
        <taxon>Nidovirales</taxon>
        <taxon>Cornidovirineae</taxon>
        <taxon>Coronaviridae</taxon>
        <taxon>Orthocoronavirinae</taxon>
        <taxon>Betacoronavirus</taxon>
        <taxon>Sarbecovirus</taxon>
        <taxon>Severe acute respiratory syndrome coronavirus</taxon>
    </lineage>
</organism>
<sequence>MESLALGVSEKTHVQLSLPVLQVRDVLVRGFGDSVEEALAEAREHLKNGTCGLVELEKGVLPQLEQPYVFIKRSDAQGTNHGYKVVELVAELDGIQYGRSGTTLGVLVPHVGETPVAYRNVLLRKNGNKGAGGHSYGIDLKSYDLGVELGTDPIEDYEQNWNTKHGGGVLRELIRELNGGAFTRYVDNNFCGPDGYPLECIKDLLARAGKSMCTLSEQLDYIESKRGVYCCREHEHEIVWFTERSEKSYERQTPFEIKSAKKFDTFKGECPKFVFPLNSKVKVIQPRVEKKKTEGFMGRIRSVYPVATPQECNDMHLSTLMKCNHCDEVSWQTCDFLKATCEQCGTENLVCEGPTTCGYLPANAVVKMPCPACQDPEVGPEHSVADYHNHSNIETRLRKGGRTKCFGGCVFAYVGCYNKRAYWVPRASANIGASHTGITGDNVETLNEDLMEILNRDRVNINIVGDFHLNEEVAIILASFSASTCAFVDTVKGLDYKTFKDIVESCGNFKVTRGRAKKGAWNIGQEKSILTPLYGFPSQAAGVIRSIFTRALDTANHSIPDLQRAAITILDGISEQSLRLIDAMVYTSDLLTNSVIVMAYVTGGLVQQITQWLSNMLGTTVDKLKPVFTWVEAKLSAGIEFLRDAWEILKFLVTGVFDIVKGQIQVASDNLKECVKAFLDVLNKALEMCIDQVIIAGAKLRTLNLGEVFIAQSKGLYRQCIRGKEQLQLLMPLRAPKEVTFFEGDSHDTVFTSEEVVLKNGELEALETPVDSFTNGAVIGTPVCVNGLMLLELKDKEQYCALSPGLLATNNVFSLKGGAPVKGVTFGEDTVLEVQGYKNVKITFELDERVDKVLNEKCSVYTVESGTEVTEFACVVAEAVVKTLQPVSDLLTNMGIDLDEWSVATFYLFDDAGEEKLSSRMYCSFYPPDEEEDCEEYEDEEEIPEETCEHEYGTEDDYKGLPLEFGASTEIQQVDEEEEEDWLEEAIAAKPEPEPLPEEPVNQFTGYLKLTDNVAIKCVDIVKEAQHAKPTVIVNAANVHLKHGGGVAGALNKATNGAMQQESDDYIKKNGPLTVGGSCLLSGHNLAKKCMHVVGPNLNAGEDVQLLKAAYANFNSQDVLLAPLLSAGIFGAKPLQSLKMCVETVRTQVYFAVNDQDLYDHVVLGYLDSLKPKVETPTQENLELKEQPAVETLTQENLELEELPVIEKPVDVKFKARIEEVNTSLEETKFLTSRLLLFADINGKLYQDSQNMLRGEDMFFLEKDAPYIVGDVISSGDITCVIIPAKKAGGTTEMLAKALKKVPVSEYITTYPGQGCAGYTLEEAKTALRKCKSVFYVLPSKTPNDKEEILGTVSWNLREMLAHAEETRKLMLICMDVKALMSTIHRRYKGIKVQEGIVDYGVRFFFYTSKEPVASIITKLNLLNEPLVTMPIGYVTHGLNLEEAARCMRSLKAPAVVSVSSPDAVTTYNGYLTSSSKTSEEHFIETVSLAGMYRDWSYSGQRTELGVEFLKRGDKVVYHTVGSPIQFHLDGEVLLLDKLKSLLSLREVRTIKVFTTVDNTNLHTQIVDMSMTYGQQFGPTYLDGADVTKIKPHAKHEGKTFFVLPSDDTLRSEAFEYYHTLDESFLGRYMSALNHTKKWKFPQIGGLTSIKWADNNCYLSSVLLALQQIEVKFNAPALQEAYYRARAGDAANFCALILAYSNRTVGELGDVRETMTHLLQHANLESAKRVLNVVCKTCGQKSTTLTGVEAVMYMGTLSYEELKTGVTIPCICGRDATQYLVQQESSFVMMSAPPSEYTLQQGAFLCANEYTGSYQCGHYTHVTVKETLYRIDGAYLTKMSEYKGPVTDVFYKEISYTTTIKPVSYKLDGVIYTEIQPKLDEYYKKDNAYYTEQPIDLVPTQPLPNASFDNFKLTCSNTKFADDLNQMTGFKKPASRELSVTFFPDLNGDVVAIDYRHYSASFKKGAKLLHKPIIWHINQTTNKTTYKPNTWCLRCLWSTKPVETSNSFEVLEVEDTQGMDNLACESQTPTSEEVVENPTIQKEVIECDVKTIEVVGNVILKPSEEGVKVTQELGHEDLMAAYVEETSITIKKPNELSLALGLRTLATHGAAAINSVPWSKILAYVKPFLGQAAVTTTNCIKRCVQRVFNNYMPYVITLLFQLCTFTRSTNSRIRASLPTTIAKNSVKSVAKLCLDVCINYVKSPKFSKLFTIAMWLLLLSICLGSLIYVTAAFGVLLSNLGIPSYCDGVRESYVNSSNVTTMDFCEGSFLCSVCLNGLDSLDSYPALETIQVTISSYKLDLTSLGLAAEWFLAYMLFTKFFYLLGLSAIMQVFFGYFASHFISNSWLMWFIISIVQMAPVSAMVRMYIFFAFCYYVWKSYVHIMDGCTSSTCMMCYKRNRATRVECTTIVNGMKRSFYVYANGGRGFCKAHNWNCLNCDTFCAGSTFISDEVARDLSLQFKRPINPTDQSSYVVDSVAVKNGALHLYFDKAGQKTYERHPLSHFVNLDNLRANNTKGSLPINVIVFDGKSKCDESAAKSASVYYSQLMCQPILLLDQALVSDVGDSTEVSVKMFDAYVDTFSATFSVPMEKLKALVATAHSELAKGVALDGVLSTFVSAARQGVVDTDVDTKDVIECLKLSHHSDLEVTGDSCNNFMLTYNKVENMTPRDLGACIDCNARHINAQVAKSHNVSLIWNVKDYMSLSEQLRKQIRSAAKKNNIPFRLTCATTRQVVNAITTKISLKGGKIVSTWFKLMLKATLLCVLAALFCYIIMPVHSLSVHDGYTNEIIGYKAIQDGVTRDIMATDDCFANKHAGFDSWFSQRGGSYRNDKSCPVVAAIITREIGFIVPGLPGTVLRAINGDFLHFLPRVFSAVGNICYTPSKLIEYSDFATSACVLAAECTIFKDAMGKPVPYCYDTNLLEGSISYSELRPDTRYVLMDGSIIQFPNTYLEGSVRVVTTFDAEYCRHGTCERSEAGVCLSTSGRWVLNNEHYRALPGVFCGVDAMNLIANIFTPLVQPVGALDVSASVVAGGIIAILVTCAAYYFMKFRRAFGEYNHVVAANALLFLMSFTILCLAPAYSFLPGVYSIFYLYLTFYFTNDVSFLAHLQWFAMFSPIVPFWITAIYVFCISLKHCHWFFNNYLRKRVMFNGVTFSTFEEAALCTFLLNKEMYLKLRSETLLPLTQYNRYLALYNKYKYFSGALDTTSYREAACCHLAKALNDFSNSGADVLYQPPQTSITSAVLQSGFRKMAFPSGKVEGCMVQVTCGTTTLNGLWLDDTVYCPRHVICTAEDMLNPNYEDLLIRKSNHSFLVQAGNVQLRVIGHSMQNCLLRLKVDTSNPKTPKYKFVRIQPGQTFSVLACYNGSPSGVYQCAMRPNYTIKGSFLNGSCGSVGFNIDYDCVSFCYMHHMELPTGVHAGTDLEGKFYGPFVDRQTAQAAGTDTTITLNVLAWLYAAVINGDRWFLNRFTTTLNDFNLVAMKYNYEPLTQDHVDILGPLSAQTGIAVLDMCAALKELLQNGMNGRTILGSTILEDEFTPFDVVRQCSGVTFQGKFKKIVKGTHHWMLLTFLTSLLILVQSTQWSLFFFVYENAFLPFTLGIMAIAACAMLLVKHKHAFLCLFLLPSLATVAYFNMVYMPASWVMRIMTWLELADTSLSGYRLKDCVMYASALVLLVLMTARTVYDDAARRVWTLMNVITLVYKVYYGNSLDQAISMWALVISVTSNYSGVVTTIMFLARAIVFVCVEYYPLLFITGNTLQCIMLVYCFLGYCCCCYFGLFCLLNRYFRLTLGVYDYLVSTQEFRYMNSQGLLPPKSSIDAFKLNIKLLGIGGKPCIKVATVQSKMSDVKCTSVVLLSVLQQLRVESSSKLWAQCVQLHNDILLAKDTTEAFEKMVSLLSVLLSMQGAVDINKLCEEMLDNRATLQAIASEFSSLPSYAAYATAQEAYEQAVANGDSEVVLKKLKKSLNVAKSEFDRDAAMQRKLEKMADQAMTQMYKQARSEDKRAKVTSAMQTMLFTMLRKLDNDALNNIINNARDGCVPLNIIPLTTAAKLMVVVPDYGTYKNTCDGNTFTYASALWEIQQVVDADSKIVQLSEINMDNSQNLAWPLIVTALRANSAVKLQNNELSPVALRQMSCAAGTTQTACTDDNALAYYNNSKGGRFVLALLSDHQDLKWARFPKSDGTGTIYTELEPPCRFVTDTPRGPKVKYLYFIKGLNNLNRGMVLGSLAATVRLQAGNATEVPANSAVLSFCAFAVDPAKAYKDYLASGGQPITNCVKMLCTHTGTGQAITVTPEANMDQESFGGASCCLYCRCHIDHPNPKGFCDLKGKYVQIPATCANDPVGFTLKNTVCTVCGTWKGYGCSCDQLREPMMQSADASTFLNRVCGVSAARLTPCGTGTSTDVVYRAFDIYNERVAGFAKFLKTNCCRFQEKDEEGNLLDSYFVVKRHTMSNYQHEETIYNLVKECPAVAVHDFFKFRVDGDMVPHISRQRLTKYTMADLVYALRHFDEGNCDTLKEILVTYNCCDDDYFNKKDWYDFVENPDILRVYANLGERVRQALLKTVQFCDAMRDAGIVGVLTLDNQDLNGNWYDFGDFVQVAPGCGVPIVDSYYSLLMPILTLTKALAAESHMDADLAKPLIKWDLLKYDFTEERLCLFDRYFKYWDQTYHPNCINCLDDRCILHCANFNVLFSTVFPPTSFGPLVRKIFVDGVPFVVSTGYHFRELGVVHNQDVNLHSSRLSFKELLVYAADPAMHAASGNLLLDKRTTCFSVAALTNNVAFQTVKPGNFNKDFYDFAVSKGFFKEGSSVELKHFFFAQDGNAAISDYDYYRYNLPTMCDIRQLLFVVEVVDKYFDCYDGGCINANQVIVNNLDKSAGFPFNKWGKARLYYDSMSYEDQDVLFAYTKRNVIPTITQMNLKYAISAKNRARTVAGVSICSTMTNRQFHQKLLKSIAATRGATVVIGTSKFYGGWHNMLKTVYSDVETPHLMGWDYPKCDRAMPNMLRIMASLVLARKHSTCCNLSHRFYRLANECAQVLSEMVMCGGSLYVKPGGTSSGDATTAYANSVFNICQAVTANVNALLSTDGNKIADKYVRNLQHRLYECLYRNRDVDHEFVDEFYAYLRKHFSMMILSDDAVVCYNSNYAAQGLVASIKNFKAVHYYQNNVFMSEAKCWTETDLTKGPHEFCSQHTMLVKQGDDYVYLPYPDPSRILGAGCFVDDIVKTDGTLMIERFVSLAIDAYPLTKHPNQEYADVFHLYLQYIRKLHDELTGHMLDMYSVMLTNDNTSRYWEPEFYEAMYTPHTVLQAVGACVLCNSQTSLRCGACIRRPFLCCKCCYDHVISTSHKLVLSVNPYVCNAPGCDVTDVTQLYLGGMSYYCKLHKPPISFPLCANGQVFGLYKNTCVGSDNVTDFNAIATCDWTNAGDYILANTCTERLKLFAAETLKATEETFKLSYGIATVREVLSDRELHLSWEVGKPRPPLNRNYVFTGYRVTKNSKVQIGEYTFEKGDYGDAVVYRGTTTYKLNVGDYFVLTSHTVMPLSAPTLVPQEHYVRITGLYPTLNISDEFSSNVANYQKVGMQKYSTLQGPPGTGKSHFAIGLALYYPSARIVYTACSHAAVDALCEKALKYLPIDKCSRIIPARARVECFDKFKVNSTLEQYVFCTVNALPETTADIVVFDEISMATNYDLSVVNARLRAKHYVYIGDPAQLPAPRTLLTKGTLEPEYFNSVCRLMKTIGPDMFLGTCRRCPAEIVDTVSALVYDNKLKAHKEKSAQCFKMFYKGVITHDVSSAINRPQIGVVREFLTRNPAWRKAVFISPYNSQNAVASKILGLPTQTVDSSQGSEYDYVIFTQTTETAHSCNVNRFNVAITRAKIGILCIMSDRDLYDKLQFTSLEVPRRNVATLQAENVTGLFKDCSKIITGLHPTQAPTHLSVDTKFKTEGLCVDIPGIPKDMTYRRLISMMGFKMNYQVNGYPNMFITREEAIRHVRAWIGFDVEGCHATRDAVGTNLPLQLGFSTGVNLVAVPTGYVDTENNTEFTRVNAKPPPGDQFKHLIPLMYKGLPWNVVRIKIVQMLSDTLKGLSDRVVFVLWAHGFELTSMKYFVKIGPERTCCLCDRRATCFSTSSDTYACWNHSVGFDYVYNPFMIDVQQWGFTGNLQSNHDQHCQVHGNAHVASCDAIMTRCLAVHECFVKRVDWSVEYPIIGDELKINAACRKVQHMVVKSALLADKFSVLHDIGNPKAIKCVPQAEVDWKFYDAQPCSDKAYKIEELFYSYATHHDKFTDGVCLFWNCNVDRYPANAIVCRFDTRVLSNLNLPGCDGGSLYVNKHAFHTPAFDKSAFTYLKQLPFFYYSDSPCESHGKQVVSDIDYVPLKSATCITRCNLGGAVCRRHANEYRQYLDAYNMMISAGFSLWIYKQFDTYNLWNTFTRLQSLENVAYNVVNKGHFDGQIGEAPVSIINNAVYTKVDGNDVEIFENKTTLPVNVAFELWAKRNIKPVPEIKILNNLGVDIAANTVIWDYKREAPAHVSTIGVCTMTDIAKKPTESACSSLTVLFDGRVEGQVDLFRNARNGVLITEGSVKGLTPSKGPAQASVNGVTLIGESVKTQFNYFKKVDGIIQQLPETYFTQSRDLEDFKPRSKMETDFLELAMDEFIQRYKLEGYAFEHIVYGDFSHGQLGGLHLMIGLAKRSQDSPLKLEDFIPTDSTVKNYFITDAQTGSSKCVCSVIDLLLDDFVEIIKSQDLSVISKVVKVTIDYAEISFMLWCKDGHVETFYPKLQASQAWQPGVAMPNLYKMQRMLLEKCDLQNYGENAVIPKGIMMNVAKYTQLCQYLNTLTLAVPYNMRVIHFGAGSDKGVAPGTAVLRQWLPTGALLVDSDLNDFVSDADSTLIGDCATVHTANKWDLIISDMYDPKTKHVTKENDSKEGFFTYLCGFIKQKLALGGSVAVKITEHSWNADLYKLMGHFSWWTAFVTNVNASSSEAFLIGVNYLGKLREQIDGYTMHANYIFWRNTNPIQLSSYSLFDMSKFPLKLRGTAVMSLKENQINDMIYSLLENGRLIIRENNRVVVSSDILVNN</sequence>
<evidence type="ECO:0000250" key="1"/>
<evidence type="ECO:0000250" key="2">
    <source>
        <dbReference type="UniProtKB" id="P0C6X7"/>
    </source>
</evidence>
<evidence type="ECO:0000250" key="3">
    <source>
        <dbReference type="UniProtKB" id="P0DTD1"/>
    </source>
</evidence>
<evidence type="ECO:0000255" key="4"/>
<evidence type="ECO:0000255" key="5">
    <source>
        <dbReference type="PROSITE-ProRule" id="PRU00214"/>
    </source>
</evidence>
<evidence type="ECO:0000255" key="6">
    <source>
        <dbReference type="PROSITE-ProRule" id="PRU00444"/>
    </source>
</evidence>
<evidence type="ECO:0000255" key="7">
    <source>
        <dbReference type="PROSITE-ProRule" id="PRU00490"/>
    </source>
</evidence>
<evidence type="ECO:0000255" key="8">
    <source>
        <dbReference type="PROSITE-ProRule" id="PRU00539"/>
    </source>
</evidence>
<evidence type="ECO:0000255" key="9">
    <source>
        <dbReference type="PROSITE-ProRule" id="PRU00772"/>
    </source>
</evidence>
<evidence type="ECO:0000255" key="10">
    <source>
        <dbReference type="PROSITE-ProRule" id="PRU00986"/>
    </source>
</evidence>
<evidence type="ECO:0000255" key="11">
    <source>
        <dbReference type="PROSITE-ProRule" id="PRU01289"/>
    </source>
</evidence>
<evidence type="ECO:0000255" key="12">
    <source>
        <dbReference type="PROSITE-ProRule" id="PRU01290"/>
    </source>
</evidence>
<evidence type="ECO:0000255" key="13">
    <source>
        <dbReference type="PROSITE-ProRule" id="PRU01291"/>
    </source>
</evidence>
<evidence type="ECO:0000255" key="14">
    <source>
        <dbReference type="PROSITE-ProRule" id="PRU01292"/>
    </source>
</evidence>
<evidence type="ECO:0000255" key="15">
    <source>
        <dbReference type="PROSITE-ProRule" id="PRU01293"/>
    </source>
</evidence>
<evidence type="ECO:0000255" key="16">
    <source>
        <dbReference type="PROSITE-ProRule" id="PRU01294"/>
    </source>
</evidence>
<evidence type="ECO:0000255" key="17">
    <source>
        <dbReference type="PROSITE-ProRule" id="PRU01295"/>
    </source>
</evidence>
<evidence type="ECO:0000255" key="18">
    <source>
        <dbReference type="PROSITE-ProRule" id="PRU01296"/>
    </source>
</evidence>
<evidence type="ECO:0000255" key="19">
    <source>
        <dbReference type="PROSITE-ProRule" id="PRU01297"/>
    </source>
</evidence>
<evidence type="ECO:0000255" key="20">
    <source>
        <dbReference type="PROSITE-ProRule" id="PRU01298"/>
    </source>
</evidence>
<evidence type="ECO:0000255" key="21">
    <source>
        <dbReference type="PROSITE-ProRule" id="PRU01299"/>
    </source>
</evidence>
<evidence type="ECO:0000255" key="22">
    <source>
        <dbReference type="PROSITE-ProRule" id="PRU01300"/>
    </source>
</evidence>
<evidence type="ECO:0000255" key="23">
    <source>
        <dbReference type="PROSITE-ProRule" id="PRU01303"/>
    </source>
</evidence>
<evidence type="ECO:0000255" key="24">
    <source>
        <dbReference type="PROSITE-ProRule" id="PRU01305"/>
    </source>
</evidence>
<evidence type="ECO:0000255" key="25">
    <source>
        <dbReference type="PROSITE-ProRule" id="PRU01306"/>
    </source>
</evidence>
<evidence type="ECO:0000255" key="26">
    <source>
        <dbReference type="PROSITE-ProRule" id="PRU01307"/>
    </source>
</evidence>
<evidence type="ECO:0000255" key="27">
    <source>
        <dbReference type="PROSITE-ProRule" id="PRU01308"/>
    </source>
</evidence>
<evidence type="ECO:0000255" key="28">
    <source>
        <dbReference type="PROSITE-ProRule" id="PRU01333"/>
    </source>
</evidence>
<evidence type="ECO:0000255" key="29">
    <source>
        <dbReference type="PROSITE-ProRule" id="PRU01334"/>
    </source>
</evidence>
<evidence type="ECO:0000255" key="30">
    <source>
        <dbReference type="PROSITE-ProRule" id="PRU01335"/>
    </source>
</evidence>
<evidence type="ECO:0000255" key="31">
    <source>
        <dbReference type="PROSITE-ProRule" id="PRU01336"/>
    </source>
</evidence>
<evidence type="ECO:0000255" key="32">
    <source>
        <dbReference type="PROSITE-ProRule" id="PRU01337"/>
    </source>
</evidence>
<evidence type="ECO:0000255" key="33">
    <source>
        <dbReference type="PROSITE-ProRule" id="PRU01338"/>
    </source>
</evidence>
<evidence type="ECO:0000255" key="34">
    <source>
        <dbReference type="PROSITE-ProRule" id="PRU01344"/>
    </source>
</evidence>
<evidence type="ECO:0000305" key="35"/>
<name>R1AB_BC279</name>
<reference key="1">
    <citation type="journal article" date="2006" name="J. Virol.">
        <title>Prevalence and genetic diversity of coronaviruses in bats from China.</title>
        <authorList>
            <person name="Tang X.C."/>
            <person name="Zhang J.X."/>
            <person name="Zhang S.Y."/>
            <person name="Wang P."/>
            <person name="Fan X.H."/>
            <person name="Li L.F."/>
            <person name="Li G."/>
            <person name="Dong B.Q."/>
            <person name="Liu W."/>
            <person name="Cheung C.L."/>
            <person name="Xu K.M."/>
            <person name="Song W.J."/>
            <person name="Vijaykrishna D."/>
            <person name="Poon L.L.M."/>
            <person name="Peiris J.S.M."/>
            <person name="Smith G.J."/>
            <person name="Chen H."/>
            <person name="Guan Y."/>
        </authorList>
    </citation>
    <scope>NUCLEOTIDE SEQUENCE [GENOMIC RNA]</scope>
</reference>
<organismHost>
    <name type="scientific">Rhinolophus macrotis</name>
    <name type="common">Big-eared horseshoe bat</name>
    <dbReference type="NCBI Taxonomy" id="196889"/>
</organismHost>
<dbReference type="EC" id="3.4.19.12"/>
<dbReference type="EC" id="3.4.22.-"/>
<dbReference type="EC" id="2.7.7.48"/>
<dbReference type="EC" id="2.7.7.50"/>
<dbReference type="EC" id="3.6.4.12"/>
<dbReference type="EC" id="3.6.4.13"/>
<dbReference type="EC" id="2.1.1.56"/>
<dbReference type="EC" id="3.1.13.-"/>
<dbReference type="EC" id="4.6.1.-"/>
<dbReference type="EC" id="2.1.1.57"/>
<dbReference type="EMBL" id="DQ648857">
    <property type="protein sequence ID" value="ABG47068.1"/>
    <property type="status" value="ALT_INIT"/>
    <property type="molecule type" value="Genomic_RNA"/>
</dbReference>
<dbReference type="BMRB" id="P0C6V9"/>
<dbReference type="SMR" id="P0C6V9"/>
<dbReference type="Proteomes" id="UP000006573">
    <property type="component" value="Genome"/>
</dbReference>
<dbReference type="GO" id="GO:0044172">
    <property type="term" value="C:host cell endoplasmic reticulum-Golgi intermediate compartment"/>
    <property type="evidence" value="ECO:0007669"/>
    <property type="project" value="UniProtKB-SubCell"/>
</dbReference>
<dbReference type="GO" id="GO:0033644">
    <property type="term" value="C:host cell membrane"/>
    <property type="evidence" value="ECO:0007669"/>
    <property type="project" value="UniProtKB-SubCell"/>
</dbReference>
<dbReference type="GO" id="GO:0044220">
    <property type="term" value="C:host cell perinuclear region of cytoplasm"/>
    <property type="evidence" value="ECO:0007669"/>
    <property type="project" value="UniProtKB-SubCell"/>
</dbReference>
<dbReference type="GO" id="GO:0016020">
    <property type="term" value="C:membrane"/>
    <property type="evidence" value="ECO:0007669"/>
    <property type="project" value="UniProtKB-KW"/>
</dbReference>
<dbReference type="GO" id="GO:0000175">
    <property type="term" value="F:3'-5'-RNA exonuclease activity"/>
    <property type="evidence" value="ECO:0007669"/>
    <property type="project" value="InterPro"/>
</dbReference>
<dbReference type="GO" id="GO:0043139">
    <property type="term" value="F:5'-3' DNA helicase activity"/>
    <property type="evidence" value="ECO:0007669"/>
    <property type="project" value="TreeGrafter"/>
</dbReference>
<dbReference type="GO" id="GO:0005524">
    <property type="term" value="F:ATP binding"/>
    <property type="evidence" value="ECO:0007669"/>
    <property type="project" value="UniProtKB-KW"/>
</dbReference>
<dbReference type="GO" id="GO:0016887">
    <property type="term" value="F:ATP hydrolysis activity"/>
    <property type="evidence" value="ECO:0007669"/>
    <property type="project" value="RHEA"/>
</dbReference>
<dbReference type="GO" id="GO:0004843">
    <property type="term" value="F:cysteine-type deubiquitinase activity"/>
    <property type="evidence" value="ECO:0007669"/>
    <property type="project" value="UniProtKB-EC"/>
</dbReference>
<dbReference type="GO" id="GO:0004197">
    <property type="term" value="F:cysteine-type endopeptidase activity"/>
    <property type="evidence" value="ECO:0007669"/>
    <property type="project" value="InterPro"/>
</dbReference>
<dbReference type="GO" id="GO:0004519">
    <property type="term" value="F:endonuclease activity"/>
    <property type="evidence" value="ECO:0007669"/>
    <property type="project" value="UniProtKB-KW"/>
</dbReference>
<dbReference type="GO" id="GO:0002151">
    <property type="term" value="F:G-quadruplex RNA binding"/>
    <property type="evidence" value="ECO:0007669"/>
    <property type="project" value="InterPro"/>
</dbReference>
<dbReference type="GO" id="GO:0016829">
    <property type="term" value="F:lyase activity"/>
    <property type="evidence" value="ECO:0007669"/>
    <property type="project" value="UniProtKB-KW"/>
</dbReference>
<dbReference type="GO" id="GO:0004483">
    <property type="term" value="F:mRNA (nucleoside-2'-O-)-methyltransferase activity"/>
    <property type="evidence" value="ECO:0007669"/>
    <property type="project" value="InterPro"/>
</dbReference>
<dbReference type="GO" id="GO:0004482">
    <property type="term" value="F:mRNA 5'-cap (guanine-N7-)-methyltransferase activity"/>
    <property type="evidence" value="ECO:0007669"/>
    <property type="project" value="InterPro"/>
</dbReference>
<dbReference type="GO" id="GO:0008242">
    <property type="term" value="F:omega peptidase activity"/>
    <property type="evidence" value="ECO:0007669"/>
    <property type="project" value="InterPro"/>
</dbReference>
<dbReference type="GO" id="GO:0003724">
    <property type="term" value="F:RNA helicase activity"/>
    <property type="evidence" value="ECO:0007669"/>
    <property type="project" value="UniProtKB-EC"/>
</dbReference>
<dbReference type="GO" id="GO:0003968">
    <property type="term" value="F:RNA-directed RNA polymerase activity"/>
    <property type="evidence" value="ECO:0007669"/>
    <property type="project" value="UniProtKB-KW"/>
</dbReference>
<dbReference type="GO" id="GO:0003727">
    <property type="term" value="F:single-stranded RNA binding"/>
    <property type="evidence" value="ECO:0007669"/>
    <property type="project" value="InterPro"/>
</dbReference>
<dbReference type="GO" id="GO:0008270">
    <property type="term" value="F:zinc ion binding"/>
    <property type="evidence" value="ECO:0007669"/>
    <property type="project" value="UniProtKB-KW"/>
</dbReference>
<dbReference type="GO" id="GO:0006351">
    <property type="term" value="P:DNA-templated transcription"/>
    <property type="evidence" value="ECO:0007669"/>
    <property type="project" value="InterPro"/>
</dbReference>
<dbReference type="GO" id="GO:0006508">
    <property type="term" value="P:proteolysis"/>
    <property type="evidence" value="ECO:0007669"/>
    <property type="project" value="UniProtKB-KW"/>
</dbReference>
<dbReference type="GO" id="GO:0010506">
    <property type="term" value="P:regulation of autophagy"/>
    <property type="evidence" value="ECO:0007669"/>
    <property type="project" value="InterPro"/>
</dbReference>
<dbReference type="GO" id="GO:0039520">
    <property type="term" value="P:symbiont-mediated activation of host autophagy"/>
    <property type="evidence" value="ECO:0007669"/>
    <property type="project" value="UniProtKB-KW"/>
</dbReference>
<dbReference type="GO" id="GO:0039595">
    <property type="term" value="P:symbiont-mediated degradation of host mRNA"/>
    <property type="evidence" value="ECO:0007669"/>
    <property type="project" value="UniProtKB-KW"/>
</dbReference>
<dbReference type="GO" id="GO:0039648">
    <property type="term" value="P:symbiont-mediated perturbation of host ubiquitin-like protein modification"/>
    <property type="evidence" value="ECO:0007669"/>
    <property type="project" value="UniProtKB-KW"/>
</dbReference>
<dbReference type="GO" id="GO:0039657">
    <property type="term" value="P:symbiont-mediated suppression of host gene expression"/>
    <property type="evidence" value="ECO:0007669"/>
    <property type="project" value="UniProtKB-KW"/>
</dbReference>
<dbReference type="GO" id="GO:0039579">
    <property type="term" value="P:symbiont-mediated suppression of host ISG15-protein conjugation"/>
    <property type="evidence" value="ECO:0007669"/>
    <property type="project" value="UniProtKB-KW"/>
</dbReference>
<dbReference type="GO" id="GO:0085034">
    <property type="term" value="P:symbiont-mediated suppression of host NF-kappaB cascade"/>
    <property type="evidence" value="ECO:0007669"/>
    <property type="project" value="UniProtKB-KW"/>
</dbReference>
<dbReference type="GO" id="GO:0039502">
    <property type="term" value="P:symbiont-mediated suppression of host type I interferon-mediated signaling pathway"/>
    <property type="evidence" value="ECO:0007669"/>
    <property type="project" value="UniProtKB-KW"/>
</dbReference>
<dbReference type="GO" id="GO:0019082">
    <property type="term" value="P:viral protein processing"/>
    <property type="evidence" value="ECO:0007669"/>
    <property type="project" value="InterPro"/>
</dbReference>
<dbReference type="GO" id="GO:0039694">
    <property type="term" value="P:viral RNA genome replication"/>
    <property type="evidence" value="ECO:0007669"/>
    <property type="project" value="InterPro"/>
</dbReference>
<dbReference type="GO" id="GO:0075523">
    <property type="term" value="P:viral translational frameshifting"/>
    <property type="evidence" value="ECO:0007669"/>
    <property type="project" value="UniProtKB-KW"/>
</dbReference>
<dbReference type="CDD" id="cd21409">
    <property type="entry name" value="1B_cv_Nsp13-like"/>
    <property type="match status" value="1"/>
</dbReference>
<dbReference type="CDD" id="cd21901">
    <property type="entry name" value="alpha_betaCoV_Nsp10"/>
    <property type="match status" value="1"/>
</dbReference>
<dbReference type="CDD" id="cd21560">
    <property type="entry name" value="betaCoV-Nsp6"/>
    <property type="match status" value="1"/>
</dbReference>
<dbReference type="CDD" id="cd21722">
    <property type="entry name" value="betaCoV_Nsp13-helicase"/>
    <property type="match status" value="1"/>
</dbReference>
<dbReference type="CDD" id="cd21659">
    <property type="entry name" value="betaCoV_Nsp14"/>
    <property type="match status" value="1"/>
</dbReference>
<dbReference type="CDD" id="cd21516">
    <property type="entry name" value="betaCoV_Nsp2_SARS-like"/>
    <property type="match status" value="1"/>
</dbReference>
<dbReference type="CDD" id="cd21666">
    <property type="entry name" value="betaCoV_Nsp5_Mpro"/>
    <property type="match status" value="1"/>
</dbReference>
<dbReference type="CDD" id="cd21827">
    <property type="entry name" value="betaCoV_Nsp7"/>
    <property type="match status" value="1"/>
</dbReference>
<dbReference type="CDD" id="cd21831">
    <property type="entry name" value="betaCoV_Nsp8"/>
    <property type="match status" value="1"/>
</dbReference>
<dbReference type="CDD" id="cd21898">
    <property type="entry name" value="betaCoV_Nsp9"/>
    <property type="match status" value="1"/>
</dbReference>
<dbReference type="CDD" id="cd21732">
    <property type="entry name" value="betaCoV_PLPro"/>
    <property type="match status" value="1"/>
</dbReference>
<dbReference type="CDD" id="cd23528">
    <property type="entry name" value="capping_2-OMTase_betaCoV_Nsp16"/>
    <property type="match status" value="1"/>
</dbReference>
<dbReference type="CDD" id="cd21473">
    <property type="entry name" value="cv_Nsp4_TM"/>
    <property type="match status" value="1"/>
</dbReference>
<dbReference type="CDD" id="cd21167">
    <property type="entry name" value="M_alpha_beta_cv_Nsp15-like"/>
    <property type="match status" value="1"/>
</dbReference>
<dbReference type="CDD" id="cd21563">
    <property type="entry name" value="Macro_cv_SUD-M_Nsp3-like"/>
    <property type="match status" value="1"/>
</dbReference>
<dbReference type="CDD" id="cd21562">
    <property type="entry name" value="Macro_cv_SUD-N_Nsp3-like"/>
    <property type="match status" value="1"/>
</dbReference>
<dbReference type="CDD" id="cd21557">
    <property type="entry name" value="Macro_X_Nsp3-like"/>
    <property type="match status" value="1"/>
</dbReference>
<dbReference type="CDD" id="cd21161">
    <property type="entry name" value="NendoU_cv_Nsp15-like"/>
    <property type="match status" value="1"/>
</dbReference>
<dbReference type="CDD" id="cd21171">
    <property type="entry name" value="NTD_alpha_betaCoV_Nsp15-like"/>
    <property type="match status" value="1"/>
</dbReference>
<dbReference type="CDD" id="cd22662">
    <property type="entry name" value="SARS-CoV-like_Nsp1_C"/>
    <property type="match status" value="1"/>
</dbReference>
<dbReference type="CDD" id="cd21796">
    <property type="entry name" value="SARS-CoV-like_Nsp1_N"/>
    <property type="match status" value="1"/>
</dbReference>
<dbReference type="CDD" id="cd21814">
    <property type="entry name" value="SARS-CoV-like_Nsp3_betaSM"/>
    <property type="match status" value="1"/>
</dbReference>
<dbReference type="CDD" id="cd21822">
    <property type="entry name" value="SARS-CoV-like_Nsp3_NAB"/>
    <property type="match status" value="1"/>
</dbReference>
<dbReference type="CDD" id="cd21591">
    <property type="entry name" value="SARS-CoV-like_RdRp"/>
    <property type="match status" value="1"/>
</dbReference>
<dbReference type="CDD" id="cd21689">
    <property type="entry name" value="stalk_CoV_Nsp13-like"/>
    <property type="match status" value="1"/>
</dbReference>
<dbReference type="CDD" id="cd21525">
    <property type="entry name" value="SUD_C_SARS-CoV_Nsp3"/>
    <property type="match status" value="1"/>
</dbReference>
<dbReference type="CDD" id="cd21717">
    <property type="entry name" value="TM_Y_SARS-CoV-like_Nsp3_C"/>
    <property type="match status" value="1"/>
</dbReference>
<dbReference type="CDD" id="cd21467">
    <property type="entry name" value="Ubl1_cv_Nsp3_N-like"/>
    <property type="match status" value="1"/>
</dbReference>
<dbReference type="CDD" id="cd21401">
    <property type="entry name" value="ZBD_cv_Nsp13-like"/>
    <property type="match status" value="1"/>
</dbReference>
<dbReference type="FunFam" id="1.10.8.370:FF:000001">
    <property type="entry name" value="Orf1a polyprotein"/>
    <property type="match status" value="1"/>
</dbReference>
<dbReference type="FunFam" id="2.40.10.250:FF:000001">
    <property type="entry name" value="Orf1a polyprotein"/>
    <property type="match status" value="1"/>
</dbReference>
<dbReference type="FunFam" id="3.30.160.820:FF:000001">
    <property type="entry name" value="Orf1ab polyprotein"/>
    <property type="match status" value="1"/>
</dbReference>
<dbReference type="FunFam" id="3.40.50.150:FF:000162">
    <property type="entry name" value="Orf1ab polyprotein"/>
    <property type="match status" value="1"/>
</dbReference>
<dbReference type="FunFam" id="3.40.50.300:FF:001105">
    <property type="entry name" value="Orf1ab polyprotein"/>
    <property type="match status" value="1"/>
</dbReference>
<dbReference type="FunFam" id="3.40.50.300:FF:001139">
    <property type="entry name" value="Orf1ab polyprotein"/>
    <property type="match status" value="1"/>
</dbReference>
<dbReference type="FunFam" id="1.10.150.420:FF:000001">
    <property type="entry name" value="Replicase polyprotein"/>
    <property type="match status" value="1"/>
</dbReference>
<dbReference type="FunFam" id="1.10.1840.10:FF:000001">
    <property type="entry name" value="Replicase polyprotein 1a"/>
    <property type="match status" value="1"/>
</dbReference>
<dbReference type="FunFam" id="1.10.8.1190:FF:000001">
    <property type="entry name" value="Replicase polyprotein 1a"/>
    <property type="match status" value="1"/>
</dbReference>
<dbReference type="FunFam" id="2.40.10.10:FF:000033">
    <property type="entry name" value="Replicase polyprotein 1a"/>
    <property type="match status" value="1"/>
</dbReference>
<dbReference type="FunFam" id="3.40.50.11580:FF:000001">
    <property type="entry name" value="Replicase polyprotein 1ab"/>
    <property type="match status" value="1"/>
</dbReference>
<dbReference type="Gene3D" id="1.10.8.1190">
    <property type="match status" value="1"/>
</dbReference>
<dbReference type="Gene3D" id="2.60.120.1680">
    <property type="match status" value="1"/>
</dbReference>
<dbReference type="Gene3D" id="3.10.20.350">
    <property type="match status" value="1"/>
</dbReference>
<dbReference type="Gene3D" id="3.10.20.540">
    <property type="match status" value="1"/>
</dbReference>
<dbReference type="Gene3D" id="3.40.50.11580">
    <property type="match status" value="1"/>
</dbReference>
<dbReference type="Gene3D" id="6.10.140.2090">
    <property type="match status" value="1"/>
</dbReference>
<dbReference type="Gene3D" id="1.10.150.420">
    <property type="entry name" value="Coronavirus nonstructural protein 4 C-terminus"/>
    <property type="match status" value="1"/>
</dbReference>
<dbReference type="Gene3D" id="3.40.30.150">
    <property type="entry name" value="Coronavirus polyprotein cleavage domain"/>
    <property type="match status" value="1"/>
</dbReference>
<dbReference type="Gene3D" id="3.40.220.10">
    <property type="entry name" value="Leucine Aminopeptidase, subunit E, domain 1"/>
    <property type="match status" value="1"/>
</dbReference>
<dbReference type="Gene3D" id="1.10.1840.10">
    <property type="entry name" value="main proteinase (3clpro) structure, domain 3"/>
    <property type="match status" value="1"/>
</dbReference>
<dbReference type="Gene3D" id="3.30.160.820">
    <property type="entry name" value="Nsp15 N-terminal domain-like"/>
    <property type="match status" value="1"/>
</dbReference>
<dbReference type="Gene3D" id="3.40.220.20">
    <property type="entry name" value="Nsp3, SUD-M subdomain"/>
    <property type="match status" value="1"/>
</dbReference>
<dbReference type="Gene3D" id="3.40.220.30">
    <property type="entry name" value="Nsp3, SUD-N subdomain"/>
    <property type="match status" value="1"/>
</dbReference>
<dbReference type="Gene3D" id="1.10.8.370">
    <property type="entry name" value="nsp7 replicase"/>
    <property type="match status" value="1"/>
</dbReference>
<dbReference type="Gene3D" id="3.30.70.3540">
    <property type="entry name" value="Nsp8 replicase, head domain"/>
    <property type="match status" value="1"/>
</dbReference>
<dbReference type="Gene3D" id="3.40.50.300">
    <property type="entry name" value="P-loop containing nucleotide triphosphate hydrolases"/>
    <property type="match status" value="2"/>
</dbReference>
<dbReference type="Gene3D" id="2.40.10.250">
    <property type="entry name" value="Replicase NSP9"/>
    <property type="match status" value="1"/>
</dbReference>
<dbReference type="Gene3D" id="3.40.50.11020">
    <property type="entry name" value="Replicase polyprotein, nucleic acid-binding domain"/>
    <property type="match status" value="1"/>
</dbReference>
<dbReference type="Gene3D" id="2.40.10.10">
    <property type="entry name" value="Trypsin-like serine proteases"/>
    <property type="match status" value="2"/>
</dbReference>
<dbReference type="Gene3D" id="3.40.50.150">
    <property type="entry name" value="Vaccinia Virus protein VP39"/>
    <property type="match status" value="1"/>
</dbReference>
<dbReference type="InterPro" id="IPR027351">
    <property type="entry name" value="(+)RNA_virus_helicase_core_dom"/>
</dbReference>
<dbReference type="InterPro" id="IPR046443">
    <property type="entry name" value="a/bCoV_NSP1_glob"/>
</dbReference>
<dbReference type="InterPro" id="IPR046440">
    <property type="entry name" value="AV_NSP11N_COV_NSP15M"/>
</dbReference>
<dbReference type="InterPro" id="IPR046442">
    <property type="entry name" value="bCoV_NSP1_C"/>
</dbReference>
<dbReference type="InterPro" id="IPR050534">
    <property type="entry name" value="Coronavir_polyprotein_1ab"/>
</dbReference>
<dbReference type="InterPro" id="IPR043608">
    <property type="entry name" value="CoV_NSP15_M"/>
</dbReference>
<dbReference type="InterPro" id="IPR043606">
    <property type="entry name" value="CoV_NSP15_N"/>
</dbReference>
<dbReference type="InterPro" id="IPR043613">
    <property type="entry name" value="CoV_NSP2_C"/>
</dbReference>
<dbReference type="InterPro" id="IPR047573">
    <property type="entry name" value="CoV_NSP2_M"/>
</dbReference>
<dbReference type="InterPro" id="IPR049894">
    <property type="entry name" value="COV_NSP3_3ECTO"/>
</dbReference>
<dbReference type="InterPro" id="IPR043611">
    <property type="entry name" value="CoV_NSP3_C"/>
</dbReference>
<dbReference type="InterPro" id="IPR047566">
    <property type="entry name" value="CoV_NSP3_Y"/>
</dbReference>
<dbReference type="InterPro" id="IPR032505">
    <property type="entry name" value="CoV_NSP4_C"/>
</dbReference>
<dbReference type="InterPro" id="IPR043612">
    <property type="entry name" value="CoV_NSP4_N"/>
</dbReference>
<dbReference type="InterPro" id="IPR043502">
    <property type="entry name" value="DNA/RNA_pol_sf"/>
</dbReference>
<dbReference type="InterPro" id="IPR041679">
    <property type="entry name" value="DNA2/NAM7-like_C"/>
</dbReference>
<dbReference type="InterPro" id="IPR022733">
    <property type="entry name" value="DPUP_SUD_C_bCoV"/>
</dbReference>
<dbReference type="InterPro" id="IPR037227">
    <property type="entry name" value="EndoU-like"/>
</dbReference>
<dbReference type="InterPro" id="IPR002589">
    <property type="entry name" value="Macro_dom"/>
</dbReference>
<dbReference type="InterPro" id="IPR043472">
    <property type="entry name" value="Macro_dom-like"/>
</dbReference>
<dbReference type="InterPro" id="IPR044371">
    <property type="entry name" value="Macro_X_NSP3-like"/>
</dbReference>
<dbReference type="InterPro" id="IPR046435">
    <property type="entry name" value="N7_MTase_CoV"/>
</dbReference>
<dbReference type="InterPro" id="IPR043609">
    <property type="entry name" value="NendoU_nidovirus"/>
</dbReference>
<dbReference type="InterPro" id="IPR044863">
    <property type="entry name" value="NIRAN"/>
</dbReference>
<dbReference type="InterPro" id="IPR046438">
    <property type="entry name" value="NIV_2_O_MTASE"/>
</dbReference>
<dbReference type="InterPro" id="IPR046436">
    <property type="entry name" value="NIV_EXON"/>
</dbReference>
<dbReference type="InterPro" id="IPR036333">
    <property type="entry name" value="NSP10_sf_CoV"/>
</dbReference>
<dbReference type="InterPro" id="IPR047570">
    <property type="entry name" value="NSP12_IF_CoV"/>
</dbReference>
<dbReference type="InterPro" id="IPR044343">
    <property type="entry name" value="NSP13_1B_dom_CoV"/>
</dbReference>
<dbReference type="InterPro" id="IPR048673">
    <property type="entry name" value="NSP13_stalk_CoV"/>
</dbReference>
<dbReference type="InterPro" id="IPR048672">
    <property type="entry name" value="NSP13_ZBD_CoV"/>
</dbReference>
<dbReference type="InterPro" id="IPR027352">
    <property type="entry name" value="NSP13_ZBD_CoV-like"/>
</dbReference>
<dbReference type="InterPro" id="IPR044315">
    <property type="entry name" value="NSP14_betaCoV"/>
</dbReference>
<dbReference type="InterPro" id="IPR009466">
    <property type="entry name" value="NSP14_CoV"/>
</dbReference>
<dbReference type="InterPro" id="IPR044330">
    <property type="entry name" value="NSP15_alpha_betaCoV_N"/>
</dbReference>
<dbReference type="InterPro" id="IPR044322">
    <property type="entry name" value="NSP15_M_alpha_beta_CoV"/>
</dbReference>
<dbReference type="InterPro" id="IPR043174">
    <property type="entry name" value="NSP15_middle_sf"/>
</dbReference>
<dbReference type="InterPro" id="IPR042515">
    <property type="entry name" value="NSP15_N_CoV"/>
</dbReference>
<dbReference type="InterPro" id="IPR044401">
    <property type="entry name" value="NSP15_NendoU_CoV"/>
</dbReference>
<dbReference type="InterPro" id="IPR009461">
    <property type="entry name" value="NSP16_CoV-like"/>
</dbReference>
<dbReference type="InterPro" id="IPR021590">
    <property type="entry name" value="NSP1_glob_bCoV"/>
</dbReference>
<dbReference type="InterPro" id="IPR038030">
    <property type="entry name" value="NSP1_glob_sf_bCoV"/>
</dbReference>
<dbReference type="InterPro" id="IPR043615">
    <property type="entry name" value="NSP2_N_CoV"/>
</dbReference>
<dbReference type="InterPro" id="IPR044389">
    <property type="entry name" value="NSP2_SARS-CoV-like"/>
</dbReference>
<dbReference type="InterPro" id="IPR024375">
    <property type="entry name" value="NSP3_bCoV"/>
</dbReference>
<dbReference type="InterPro" id="IPR047567">
    <property type="entry name" value="NSP3_G2M_bCoV"/>
</dbReference>
<dbReference type="InterPro" id="IPR024358">
    <property type="entry name" value="NSP3_N_bCoV"/>
</dbReference>
<dbReference type="InterPro" id="IPR032592">
    <property type="entry name" value="NSP3_NAB_bCoV"/>
</dbReference>
<dbReference type="InterPro" id="IPR042570">
    <property type="entry name" value="NSP3_NAB_bCoV_sf"/>
</dbReference>
<dbReference type="InterPro" id="IPR038166">
    <property type="entry name" value="NSP3_PL2pro_sf_bCoV"/>
</dbReference>
<dbReference type="InterPro" id="IPR038400">
    <property type="entry name" value="NSP3_SUD-M_sf_bCoV"/>
</dbReference>
<dbReference type="InterPro" id="IPR044864">
    <property type="entry name" value="NSP3_SUD-N_bCoV"/>
</dbReference>
<dbReference type="InterPro" id="IPR044374">
    <property type="entry name" value="NSP3_SUD-N_SARS-CoV"/>
</dbReference>
<dbReference type="InterPro" id="IPR043478">
    <property type="entry name" value="NSP3_SUD-N_sf_bCoV"/>
</dbReference>
<dbReference type="InterPro" id="IPR044357">
    <property type="entry name" value="NSP3_Ubl1_dom_CoV"/>
</dbReference>
<dbReference type="InterPro" id="IPR044353">
    <property type="entry name" value="Nsp3_Ubl2_dom_CoV"/>
</dbReference>
<dbReference type="InterPro" id="IPR038083">
    <property type="entry name" value="NSP3A-like"/>
</dbReference>
<dbReference type="InterPro" id="IPR038123">
    <property type="entry name" value="NSP4_C_sf_CoV"/>
</dbReference>
<dbReference type="InterPro" id="IPR044367">
    <property type="entry name" value="NSP6_betaCoV"/>
</dbReference>
<dbReference type="InterPro" id="IPR043610">
    <property type="entry name" value="NSP6_CoV"/>
</dbReference>
<dbReference type="InterPro" id="IPR014828">
    <property type="entry name" value="NSP7_CoV"/>
</dbReference>
<dbReference type="InterPro" id="IPR037204">
    <property type="entry name" value="NSP7_sf_CoV"/>
</dbReference>
<dbReference type="InterPro" id="IPR014829">
    <property type="entry name" value="NSP8_CoV"/>
</dbReference>
<dbReference type="InterPro" id="IPR037230">
    <property type="entry name" value="NSP8_sf_CoV"/>
</dbReference>
<dbReference type="InterPro" id="IPR014822">
    <property type="entry name" value="NSP9_CoV"/>
</dbReference>
<dbReference type="InterPro" id="IPR036499">
    <property type="entry name" value="NSP9_sf_CoV"/>
</dbReference>
<dbReference type="InterPro" id="IPR027417">
    <property type="entry name" value="P-loop_NTPase"/>
</dbReference>
<dbReference type="InterPro" id="IPR013016">
    <property type="entry name" value="Peptidase_C16_CoV"/>
</dbReference>
<dbReference type="InterPro" id="IPR008740">
    <property type="entry name" value="Peptidase_C30_CoV"/>
</dbReference>
<dbReference type="InterPro" id="IPR043477">
    <property type="entry name" value="Peptidase_C30_dom3_CoV"/>
</dbReference>
<dbReference type="InterPro" id="IPR009003">
    <property type="entry name" value="Peptidase_S1_PA"/>
</dbReference>
<dbReference type="InterPro" id="IPR043504">
    <property type="entry name" value="Peptidase_S1_PA_chymotrypsin"/>
</dbReference>
<dbReference type="InterPro" id="IPR043177">
    <property type="entry name" value="PLpro_N_sf_CoV"/>
</dbReference>
<dbReference type="InterPro" id="IPR043503">
    <property type="entry name" value="PLpro_palm_finger_dom_CoV"/>
</dbReference>
<dbReference type="InterPro" id="IPR043178">
    <property type="entry name" value="PLpro_thumb_sf_CoV"/>
</dbReference>
<dbReference type="InterPro" id="IPR046441">
    <property type="entry name" value="RdRp_CoV"/>
</dbReference>
<dbReference type="InterPro" id="IPR009469">
    <property type="entry name" value="RdRp_N_CoV"/>
</dbReference>
<dbReference type="InterPro" id="IPR044351">
    <property type="entry name" value="RdRp_SARS-CoV-like"/>
</dbReference>
<dbReference type="InterPro" id="IPR001205">
    <property type="entry name" value="RNA-dir_pol_C"/>
</dbReference>
<dbReference type="InterPro" id="IPR007094">
    <property type="entry name" value="RNA-dir_pol_PSvirus"/>
</dbReference>
<dbReference type="InterPro" id="IPR018995">
    <property type="entry name" value="RNA_synth_NSP10_CoV"/>
</dbReference>
<dbReference type="InterPro" id="IPR029063">
    <property type="entry name" value="SAM-dependent_MTases_sf"/>
</dbReference>
<dbReference type="PANTHER" id="PTHR43788">
    <property type="entry name" value="DNA2/NAM7 HELICASE FAMILY MEMBER"/>
    <property type="match status" value="1"/>
</dbReference>
<dbReference type="PANTHER" id="PTHR43788:SF16">
    <property type="entry name" value="HELICASE WITH ZINC FINGER 2"/>
    <property type="match status" value="1"/>
</dbReference>
<dbReference type="Pfam" id="PF13087">
    <property type="entry name" value="AAA_12"/>
    <property type="match status" value="1"/>
</dbReference>
<dbReference type="Pfam" id="PF16251">
    <property type="entry name" value="bCoV_NAB"/>
    <property type="match status" value="1"/>
</dbReference>
<dbReference type="Pfam" id="PF11501">
    <property type="entry name" value="bCoV_NSP1"/>
    <property type="match status" value="1"/>
</dbReference>
<dbReference type="Pfam" id="PF12379">
    <property type="entry name" value="bCoV_NSP3_N"/>
    <property type="match status" value="1"/>
</dbReference>
<dbReference type="Pfam" id="PF12124">
    <property type="entry name" value="bCoV_SUD_C"/>
    <property type="match status" value="1"/>
</dbReference>
<dbReference type="Pfam" id="PF11633">
    <property type="entry name" value="bCoV_SUD_M"/>
    <property type="match status" value="1"/>
</dbReference>
<dbReference type="Pfam" id="PF06471">
    <property type="entry name" value="CoV_ExoN"/>
    <property type="match status" value="1"/>
</dbReference>
<dbReference type="Pfam" id="PF06460">
    <property type="entry name" value="CoV_Methyltr_2"/>
    <property type="match status" value="1"/>
</dbReference>
<dbReference type="Pfam" id="PF09401">
    <property type="entry name" value="CoV_NSP10"/>
    <property type="match status" value="1"/>
</dbReference>
<dbReference type="Pfam" id="PF20631">
    <property type="entry name" value="CoV_NSP13_1B"/>
    <property type="match status" value="1"/>
</dbReference>
<dbReference type="Pfam" id="PF20633">
    <property type="entry name" value="CoV_NSP13_stalk"/>
    <property type="match status" value="1"/>
</dbReference>
<dbReference type="Pfam" id="PF20632">
    <property type="entry name" value="CoV_NSP13_ZBD"/>
    <property type="match status" value="1"/>
</dbReference>
<dbReference type="Pfam" id="PF19215">
    <property type="entry name" value="CoV_NSP15_C"/>
    <property type="match status" value="1"/>
</dbReference>
<dbReference type="Pfam" id="PF19216">
    <property type="entry name" value="CoV_NSP15_M"/>
    <property type="match status" value="1"/>
</dbReference>
<dbReference type="Pfam" id="PF19219">
    <property type="entry name" value="CoV_NSP15_N"/>
    <property type="match status" value="1"/>
</dbReference>
<dbReference type="Pfam" id="PF19212">
    <property type="entry name" value="CoV_NSP2_C"/>
    <property type="match status" value="1"/>
</dbReference>
<dbReference type="Pfam" id="PF19211">
    <property type="entry name" value="CoV_NSP2_N"/>
    <property type="match status" value="1"/>
</dbReference>
<dbReference type="Pfam" id="PF19218">
    <property type="entry name" value="CoV_NSP3_C"/>
    <property type="match status" value="1"/>
</dbReference>
<dbReference type="Pfam" id="PF16348">
    <property type="entry name" value="CoV_NSP4_C"/>
    <property type="match status" value="1"/>
</dbReference>
<dbReference type="Pfam" id="PF19217">
    <property type="entry name" value="CoV_NSP4_N"/>
    <property type="match status" value="1"/>
</dbReference>
<dbReference type="Pfam" id="PF19213">
    <property type="entry name" value="CoV_NSP6"/>
    <property type="match status" value="1"/>
</dbReference>
<dbReference type="Pfam" id="PF08716">
    <property type="entry name" value="CoV_NSP7"/>
    <property type="match status" value="1"/>
</dbReference>
<dbReference type="Pfam" id="PF08717">
    <property type="entry name" value="CoV_NSP8"/>
    <property type="match status" value="1"/>
</dbReference>
<dbReference type="Pfam" id="PF08710">
    <property type="entry name" value="CoV_NSP9"/>
    <property type="match status" value="1"/>
</dbReference>
<dbReference type="Pfam" id="PF08715">
    <property type="entry name" value="CoV_peptidase"/>
    <property type="match status" value="1"/>
</dbReference>
<dbReference type="Pfam" id="PF06478">
    <property type="entry name" value="CoV_RPol_N"/>
    <property type="match status" value="1"/>
</dbReference>
<dbReference type="Pfam" id="PF01661">
    <property type="entry name" value="Macro"/>
    <property type="match status" value="1"/>
</dbReference>
<dbReference type="Pfam" id="PF05409">
    <property type="entry name" value="Peptidase_C30"/>
    <property type="match status" value="1"/>
</dbReference>
<dbReference type="Pfam" id="PF00680">
    <property type="entry name" value="RdRP_1"/>
    <property type="match status" value="1"/>
</dbReference>
<dbReference type="SMART" id="SM00506">
    <property type="entry name" value="A1pp"/>
    <property type="match status" value="1"/>
</dbReference>
<dbReference type="SUPFAM" id="SSF144246">
    <property type="entry name" value="Coronavirus NSP10-like"/>
    <property type="match status" value="1"/>
</dbReference>
<dbReference type="SUPFAM" id="SSF140367">
    <property type="entry name" value="Coronavirus NSP7-like"/>
    <property type="match status" value="1"/>
</dbReference>
<dbReference type="SUPFAM" id="SSF143076">
    <property type="entry name" value="Coronavirus NSP8-like"/>
    <property type="match status" value="1"/>
</dbReference>
<dbReference type="SUPFAM" id="SSF56672">
    <property type="entry name" value="DNA/RNA polymerases"/>
    <property type="match status" value="1"/>
</dbReference>
<dbReference type="SUPFAM" id="SSF142877">
    <property type="entry name" value="EndoU-like"/>
    <property type="match status" value="1"/>
</dbReference>
<dbReference type="SUPFAM" id="SSF52949">
    <property type="entry name" value="Macro domain-like"/>
    <property type="match status" value="1"/>
</dbReference>
<dbReference type="SUPFAM" id="SSF159936">
    <property type="entry name" value="NSP3A-like"/>
    <property type="match status" value="1"/>
</dbReference>
<dbReference type="SUPFAM" id="SSF52540">
    <property type="entry name" value="P-loop containing nucleoside triphosphate hydrolases"/>
    <property type="match status" value="1"/>
</dbReference>
<dbReference type="SUPFAM" id="SSF101816">
    <property type="entry name" value="Replicase NSP9"/>
    <property type="match status" value="1"/>
</dbReference>
<dbReference type="SUPFAM" id="SSF53335">
    <property type="entry name" value="S-adenosyl-L-methionine-dependent methyltransferases"/>
    <property type="match status" value="1"/>
</dbReference>
<dbReference type="SUPFAM" id="SSF160099">
    <property type="entry name" value="SARS Nsp1-like"/>
    <property type="match status" value="1"/>
</dbReference>
<dbReference type="SUPFAM" id="SSF50494">
    <property type="entry name" value="Trypsin-like serine proteases"/>
    <property type="match status" value="1"/>
</dbReference>
<dbReference type="PROSITE" id="PS51961">
    <property type="entry name" value="AV_NSP11N_COV_NSP15M"/>
    <property type="match status" value="1"/>
</dbReference>
<dbReference type="PROSITE" id="PS51963">
    <property type="entry name" value="BCOV_NSP1_C"/>
    <property type="match status" value="1"/>
</dbReference>
<dbReference type="PROSITE" id="PS51942">
    <property type="entry name" value="BCOV_NSP3C_C"/>
    <property type="match status" value="1"/>
</dbReference>
<dbReference type="PROSITE" id="PS51941">
    <property type="entry name" value="BCOV_NSP3C_M"/>
    <property type="match status" value="1"/>
</dbReference>
<dbReference type="PROSITE" id="PS51994">
    <property type="entry name" value="BCOV_NSP3E_G2M"/>
    <property type="match status" value="1"/>
</dbReference>
<dbReference type="PROSITE" id="PS51945">
    <property type="entry name" value="BCOV_NSP3E_NAB"/>
    <property type="match status" value="1"/>
</dbReference>
<dbReference type="PROSITE" id="PS51993">
    <property type="entry name" value="COV_3ECTO"/>
    <property type="match status" value="1"/>
</dbReference>
<dbReference type="PROSITE" id="PS51952">
    <property type="entry name" value="COV_EXON_MTASE_COACT"/>
    <property type="match status" value="1"/>
</dbReference>
<dbReference type="PROSITE" id="PS51954">
    <property type="entry name" value="COV_N7_MTASE"/>
    <property type="match status" value="1"/>
</dbReference>
<dbReference type="PROSITE" id="PS51962">
    <property type="entry name" value="COV_NSP1"/>
    <property type="match status" value="1"/>
</dbReference>
<dbReference type="PROSITE" id="PS52000">
    <property type="entry name" value="COV_NSP12_IF"/>
    <property type="match status" value="1"/>
</dbReference>
<dbReference type="PROSITE" id="PS51948">
    <property type="entry name" value="COV_NSP12_RDRP"/>
    <property type="match status" value="1"/>
</dbReference>
<dbReference type="PROSITE" id="PS51960">
    <property type="entry name" value="COV_NSP15_NTD"/>
    <property type="match status" value="1"/>
</dbReference>
<dbReference type="PROSITE" id="PS51991">
    <property type="entry name" value="COV_NSP2_C"/>
    <property type="match status" value="1"/>
</dbReference>
<dbReference type="PROSITE" id="PS51990">
    <property type="entry name" value="COV_NSP2_M"/>
    <property type="match status" value="1"/>
</dbReference>
<dbReference type="PROSITE" id="PS51989">
    <property type="entry name" value="COV_NSP2_N"/>
    <property type="match status" value="1"/>
</dbReference>
<dbReference type="PROSITE" id="PS51992">
    <property type="entry name" value="COV_NSP3_Y"/>
    <property type="match status" value="1"/>
</dbReference>
<dbReference type="PROSITE" id="PS51943">
    <property type="entry name" value="COV_NSP3A_UBL"/>
    <property type="match status" value="1"/>
</dbReference>
<dbReference type="PROSITE" id="PS51944">
    <property type="entry name" value="COV_NSP3D_UBL"/>
    <property type="match status" value="1"/>
</dbReference>
<dbReference type="PROSITE" id="PS51946">
    <property type="entry name" value="COV_NSP4C"/>
    <property type="match status" value="1"/>
</dbReference>
<dbReference type="PROSITE" id="PS51949">
    <property type="entry name" value="COV_NSP7"/>
    <property type="match status" value="1"/>
</dbReference>
<dbReference type="PROSITE" id="PS51950">
    <property type="entry name" value="COV_NSP8"/>
    <property type="match status" value="1"/>
</dbReference>
<dbReference type="PROSITE" id="PS51951">
    <property type="entry name" value="COV_NSP9_SSRNA_BD"/>
    <property type="match status" value="1"/>
</dbReference>
<dbReference type="PROSITE" id="PS51653">
    <property type="entry name" value="CV_ZBD"/>
    <property type="match status" value="1"/>
</dbReference>
<dbReference type="PROSITE" id="PS51442">
    <property type="entry name" value="M_PRO"/>
    <property type="match status" value="1"/>
</dbReference>
<dbReference type="PROSITE" id="PS51154">
    <property type="entry name" value="MACRO"/>
    <property type="match status" value="1"/>
</dbReference>
<dbReference type="PROSITE" id="PS51958">
    <property type="entry name" value="NENDOU"/>
    <property type="match status" value="1"/>
</dbReference>
<dbReference type="PROSITE" id="PS51947">
    <property type="entry name" value="NIRAN"/>
    <property type="match status" value="1"/>
</dbReference>
<dbReference type="PROSITE" id="PS51955">
    <property type="entry name" value="NIV_2_O_MTASE"/>
    <property type="match status" value="1"/>
</dbReference>
<dbReference type="PROSITE" id="PS51953">
    <property type="entry name" value="NIV_EXON"/>
    <property type="match status" value="1"/>
</dbReference>
<dbReference type="PROSITE" id="PS51124">
    <property type="entry name" value="PEPTIDASE_C16"/>
    <property type="match status" value="1"/>
</dbReference>
<dbReference type="PROSITE" id="PS51657">
    <property type="entry name" value="PSRV_HELICASE"/>
    <property type="match status" value="1"/>
</dbReference>
<dbReference type="PROSITE" id="PS50507">
    <property type="entry name" value="RDRP_SSRNA_POS"/>
    <property type="match status" value="1"/>
</dbReference>
<dbReference type="PROSITE" id="PS51940">
    <property type="entry name" value="SARS_NSP3C_N"/>
    <property type="match status" value="1"/>
</dbReference>
<keyword id="KW-1072">Activation of host autophagy by virus</keyword>
<keyword id="KW-0067">ATP-binding</keyword>
<keyword id="KW-1132">Decay of host mRNAs by virus</keyword>
<keyword id="KW-1015">Disulfide bond</keyword>
<keyword id="KW-0255">Endonuclease</keyword>
<keyword id="KW-1262">Eukaryotic host gene expression shutoff by virus</keyword>
<keyword id="KW-1193">Eukaryotic host translation shutoff by virus</keyword>
<keyword id="KW-0269">Exonuclease</keyword>
<keyword id="KW-0347">Helicase</keyword>
<keyword id="KW-1035">Host cytoplasm</keyword>
<keyword id="KW-1190">Host gene expression shutoff by virus</keyword>
<keyword id="KW-1043">Host membrane</keyword>
<keyword id="KW-1192">Host mRNA suppression by virus</keyword>
<keyword id="KW-0945">Host-virus interaction</keyword>
<keyword id="KW-0378">Hydrolase</keyword>
<keyword id="KW-1090">Inhibition of host innate immune response by virus</keyword>
<keyword id="KW-1114">Inhibition of host interferon signaling pathway by virus</keyword>
<keyword id="KW-1095">Inhibition of host ISG15 by virus</keyword>
<keyword id="KW-1100">Inhibition of host NF-kappa-B by virus</keyword>
<keyword id="KW-0922">Interferon antiviral system evasion</keyword>
<keyword id="KW-0456">Lyase</keyword>
<keyword id="KW-0464">Manganese</keyword>
<keyword id="KW-0472">Membrane</keyword>
<keyword id="KW-0479">Metal-binding</keyword>
<keyword id="KW-0489">Methyltransferase</keyword>
<keyword id="KW-1127">Modulation of host ubiquitin pathway by viral deubiquitinase</keyword>
<keyword id="KW-1130">Modulation of host ubiquitin pathway by virus</keyword>
<keyword id="KW-0540">Nuclease</keyword>
<keyword id="KW-0547">Nucleotide-binding</keyword>
<keyword id="KW-0548">Nucleotidyltransferase</keyword>
<keyword id="KW-0645">Protease</keyword>
<keyword id="KW-0677">Repeat</keyword>
<keyword id="KW-0688">Ribosomal frameshifting</keyword>
<keyword id="KW-0694">RNA-binding</keyword>
<keyword id="KW-0696">RNA-directed RNA polymerase</keyword>
<keyword id="KW-0788">Thiol protease</keyword>
<keyword id="KW-0808">Transferase</keyword>
<keyword id="KW-0812">Transmembrane</keyword>
<keyword id="KW-1133">Transmembrane helix</keyword>
<keyword id="KW-0833">Ubl conjugation pathway</keyword>
<keyword id="KW-0899">Viral immunoevasion</keyword>
<keyword id="KW-0693">Viral RNA replication</keyword>
<keyword id="KW-0862">Zinc</keyword>
<keyword id="KW-0863">Zinc-finger</keyword>
<accession>P0C6V9</accession>
<accession>Q0Q476</accession>
<proteinExistence type="inferred from homology"/>
<protein>
    <recommendedName>
        <fullName>Replicase polyprotein 1ab</fullName>
        <shortName>pp1ab</shortName>
    </recommendedName>
    <alternativeName>
        <fullName>ORF1ab polyprotein</fullName>
    </alternativeName>
    <component>
        <recommendedName>
            <fullName>Host translation inhibitor nsp1</fullName>
            <shortName>nsp1</shortName>
        </recommendedName>
        <alternativeName>
            <fullName>Leader protein</fullName>
        </alternativeName>
    </component>
    <component>
        <recommendedName>
            <fullName>Non-structural protein 2</fullName>
            <shortName>nsp2</shortName>
        </recommendedName>
        <alternativeName>
            <fullName>p65 homolog</fullName>
        </alternativeName>
    </component>
    <component>
        <recommendedName>
            <fullName>Papain-like proteinase nsp3</fullName>
            <shortName>PL-PRO</shortName>
            <ecNumber>3.4.19.12</ecNumber>
            <ecNumber>3.4.22.-</ecNumber>
        </recommendedName>
        <alternativeName>
            <fullName>Non-structural protein 3</fullName>
            <shortName>nsp3</shortName>
        </alternativeName>
    </component>
    <component>
        <recommendedName>
            <fullName>Non-structural protein 4</fullName>
            <shortName>nsp4</shortName>
        </recommendedName>
    </component>
    <component>
        <recommendedName>
            <fullName>3C-like proteinase nsp5</fullName>
            <shortName>3CL-PRO</shortName>
            <shortName>3CLp</shortName>
            <ecNumber>3.4.22.-</ecNumber>
        </recommendedName>
        <alternativeName>
            <fullName>nsp5</fullName>
        </alternativeName>
    </component>
    <component>
        <recommendedName>
            <fullName>Non-structural protein 6</fullName>
            <shortName>nsp6</shortName>
        </recommendedName>
    </component>
    <component>
        <recommendedName>
            <fullName>Non-structural protein 7</fullName>
            <shortName>nsp7</shortName>
        </recommendedName>
    </component>
    <component>
        <recommendedName>
            <fullName>Non-structural protein 8</fullName>
            <shortName>nsp8</shortName>
        </recommendedName>
    </component>
    <component>
        <recommendedName>
            <fullName>Viral protein genome-linked nsp9</fullName>
        </recommendedName>
        <alternativeName>
            <fullName>Non-structural protein 9</fullName>
            <shortName>nsp9</shortName>
        </alternativeName>
        <alternativeName>
            <fullName>RNA-capping enzyme subunit nsp9</fullName>
        </alternativeName>
    </component>
    <component>
        <recommendedName>
            <fullName>Non-structural protein 10</fullName>
            <shortName>nsp10</shortName>
        </recommendedName>
        <alternativeName>
            <fullName>Growth factor-like peptide</fullName>
            <shortName>GFL</shortName>
        </alternativeName>
    </component>
    <component>
        <recommendedName>
            <fullName>RNA-directed RNA polymerase nsp12</fullName>
            <shortName>Pol</shortName>
            <shortName>RdRp</shortName>
            <ecNumber>2.7.7.48</ecNumber>
            <ecNumber>2.7.7.50</ecNumber>
        </recommendedName>
        <alternativeName>
            <fullName>nsp12</fullName>
        </alternativeName>
    </component>
    <component>
        <recommendedName>
            <fullName>Helicase nsp13</fullName>
            <shortName>Hel</shortName>
            <ecNumber>3.6.4.12</ecNumber>
            <ecNumber>3.6.4.13</ecNumber>
        </recommendedName>
        <alternativeName>
            <fullName>nsp13</fullName>
        </alternativeName>
    </component>
    <component>
        <recommendedName>
            <fullName>Guanine-N7 methyltransferase nsp14</fullName>
            <shortName>ExoN</shortName>
            <ecNumber>2.1.1.56</ecNumber>
            <ecNumber>3.1.13.-</ecNumber>
        </recommendedName>
        <alternativeName>
            <fullName>nsp14</fullName>
        </alternativeName>
    </component>
    <component>
        <recommendedName>
            <fullName>Uridylate-specific endoribonuclease nsp15</fullName>
            <ecNumber>4.6.1.-</ecNumber>
        </recommendedName>
        <alternativeName>
            <fullName>NendoU</fullName>
        </alternativeName>
        <alternativeName>
            <fullName>nsp15</fullName>
        </alternativeName>
    </component>
    <component>
        <recommendedName>
            <fullName>2'-O-methyltransferase nsp16</fullName>
            <ecNumber>2.1.1.57</ecNumber>
        </recommendedName>
        <alternativeName>
            <fullName>nsp16</fullName>
        </alternativeName>
    </component>
</protein>
<feature type="chain" id="PRO_0000289896" description="Host translation inhibitor nsp1" evidence="2">
    <location>
        <begin position="1"/>
        <end position="179"/>
    </location>
</feature>
<feature type="chain" id="PRO_0000289897" description="Non-structural protein 2" evidence="2">
    <location>
        <begin position="180"/>
        <end position="818"/>
    </location>
</feature>
<feature type="chain" id="PRO_0000289898" description="Papain-like proteinase nsp3" evidence="2">
    <location>
        <begin position="819"/>
        <end position="2746"/>
    </location>
</feature>
<feature type="chain" id="PRO_0000289899" description="Non-structural protein 4" evidence="2">
    <location>
        <begin position="2747"/>
        <end position="3246"/>
    </location>
</feature>
<feature type="chain" id="PRO_0000289900" description="3C-like proteinase nsp5" evidence="2">
    <location>
        <begin position="3247"/>
        <end position="3552"/>
    </location>
</feature>
<feature type="chain" id="PRO_0000289901" description="Non-structural protein 6" evidence="2">
    <location>
        <begin position="3553"/>
        <end position="3842"/>
    </location>
</feature>
<feature type="chain" id="PRO_0000289902" description="Non-structural protein 7" evidence="2">
    <location>
        <begin position="3843"/>
        <end position="3925"/>
    </location>
</feature>
<feature type="chain" id="PRO_0000289903" description="Non-structural protein 8" evidence="2">
    <location>
        <begin position="3926"/>
        <end position="4123"/>
    </location>
</feature>
<feature type="chain" id="PRO_0000289904" description="Viral protein genome-linked nsp9" evidence="2">
    <location>
        <begin position="4124"/>
        <end position="4236"/>
    </location>
</feature>
<feature type="chain" id="PRO_0000289905" description="Non-structural protein 10" evidence="2">
    <location>
        <begin position="4237"/>
        <end position="4375"/>
    </location>
</feature>
<feature type="chain" id="PRO_0000289906" description="RNA-directed RNA polymerase nsp12" evidence="2">
    <location>
        <begin position="4376"/>
        <end position="5307"/>
    </location>
</feature>
<feature type="chain" id="PRO_0000289907" description="Helicase nsp13" evidence="2">
    <location>
        <begin position="5308"/>
        <end position="5908"/>
    </location>
</feature>
<feature type="chain" id="PRO_0000289908" description="Guanine-N7 methyltransferase nsp14" evidence="2">
    <location>
        <begin position="5909"/>
        <end position="6435"/>
    </location>
</feature>
<feature type="chain" id="PRO_0000289909" description="Uridylate-specific endoribonuclease nsp15" evidence="2">
    <location>
        <begin position="6436"/>
        <end position="6781"/>
    </location>
</feature>
<feature type="chain" id="PRO_0000289910" description="2'-O-methyltransferase nsp16" evidence="2">
    <location>
        <begin position="6782"/>
        <end position="7079"/>
    </location>
</feature>
<feature type="transmembrane region" description="Helical" evidence="4">
    <location>
        <begin position="2209"/>
        <end position="2229"/>
    </location>
</feature>
<feature type="transmembrane region" description="Helical" evidence="4">
    <location>
        <begin position="2310"/>
        <end position="2330"/>
    </location>
</feature>
<feature type="transmembrane region" description="Helical" evidence="4">
    <location>
        <begin position="2357"/>
        <end position="2377"/>
    </location>
</feature>
<feature type="transmembrane region" description="Helical" evidence="4">
    <location>
        <begin position="2761"/>
        <end position="2781"/>
    </location>
</feature>
<feature type="transmembrane region" description="Helical" evidence="4">
    <location>
        <begin position="2998"/>
        <end position="3018"/>
    </location>
</feature>
<feature type="transmembrane region" description="Helical" evidence="4">
    <location>
        <begin position="3028"/>
        <end position="3048"/>
    </location>
</feature>
<feature type="transmembrane region" description="Helical" evidence="4">
    <location>
        <begin position="3060"/>
        <end position="3080"/>
    </location>
</feature>
<feature type="transmembrane region" description="Helical" evidence="4">
    <location>
        <begin position="3083"/>
        <end position="3103"/>
    </location>
</feature>
<feature type="transmembrane region" description="Helical" evidence="4">
    <location>
        <begin position="3111"/>
        <end position="3131"/>
    </location>
</feature>
<feature type="transmembrane region" description="Helical" evidence="4">
    <location>
        <begin position="3148"/>
        <end position="3168"/>
    </location>
</feature>
<feature type="transmembrane region" description="Helical" evidence="4">
    <location>
        <begin position="3570"/>
        <end position="3590"/>
    </location>
</feature>
<feature type="transmembrane region" description="Helical" evidence="4">
    <location>
        <begin position="3592"/>
        <end position="3612"/>
    </location>
</feature>
<feature type="transmembrane region" description="Helical" evidence="4">
    <location>
        <begin position="3618"/>
        <end position="3638"/>
    </location>
</feature>
<feature type="transmembrane region" description="Helical" evidence="4">
    <location>
        <begin position="3665"/>
        <end position="3684"/>
    </location>
</feature>
<feature type="transmembrane region" description="Helical" evidence="4">
    <location>
        <begin position="3691"/>
        <end position="3710"/>
    </location>
</feature>
<feature type="transmembrane region" description="Helical" evidence="4">
    <location>
        <begin position="3734"/>
        <end position="3754"/>
    </location>
</feature>
<feature type="transmembrane region" description="Helical" evidence="4">
    <location>
        <begin position="3762"/>
        <end position="3782"/>
    </location>
</feature>
<feature type="domain" description="CoV Nsp1 globular" evidence="26">
    <location>
        <begin position="12"/>
        <end position="127"/>
    </location>
</feature>
<feature type="domain" description="BetaCoV Nsp1 C-terminal" evidence="27">
    <location>
        <begin position="148"/>
        <end position="179"/>
    </location>
</feature>
<feature type="domain" description="CoV Nsp2 N-terminal" evidence="28">
    <location>
        <begin position="183"/>
        <end position="456"/>
    </location>
</feature>
<feature type="domain" description="CoV Nsp2 middle" evidence="29">
    <location>
        <begin position="458"/>
        <end position="688"/>
    </location>
</feature>
<feature type="domain" description="CoV Nsp2 C-terminal" evidence="30">
    <location>
        <begin position="690"/>
        <end position="818"/>
    </location>
</feature>
<feature type="domain" description="Ubiquitin-like 1" evidence="5">
    <location>
        <begin position="822"/>
        <end position="930"/>
    </location>
</feature>
<feature type="domain" description="Macro 1" evidence="7">
    <location>
        <begin position="1001"/>
        <end position="1167"/>
    </location>
</feature>
<feature type="domain" description="Macro 2" evidence="7">
    <location>
        <begin position="1213"/>
        <end position="1341"/>
    </location>
</feature>
<feature type="domain" description="Macro 3" evidence="7">
    <location>
        <begin position="1349"/>
        <end position="1476"/>
    </location>
</feature>
<feature type="domain" description="DPUP" evidence="11">
    <location>
        <begin position="1478"/>
        <end position="1544"/>
    </location>
</feature>
<feature type="domain" description="Ubiquitin-like 2" evidence="5">
    <location>
        <begin position="1548"/>
        <end position="1603"/>
    </location>
</feature>
<feature type="domain" description="Peptidase C16" evidence="6">
    <location>
        <begin position="1617"/>
        <end position="1881"/>
    </location>
</feature>
<feature type="domain" description="Nucleic acid-binding" evidence="12">
    <location>
        <begin position="1894"/>
        <end position="2004"/>
    </location>
</feature>
<feature type="domain" description="G2M" evidence="33">
    <location>
        <begin position="2029"/>
        <end position="2138"/>
    </location>
</feature>
<feature type="domain" description="3Ecto" evidence="32">
    <location>
        <begin position="2230"/>
        <end position="2300"/>
    </location>
</feature>
<feature type="domain" description="CoV Nsp3 Y" evidence="31">
    <location>
        <begin position="2378"/>
        <end position="2746"/>
    </location>
</feature>
<feature type="domain" description="Nsp4C" evidence="13">
    <location>
        <begin position="3148"/>
        <end position="3246"/>
    </location>
</feature>
<feature type="domain" description="Peptidase C30" evidence="9">
    <location>
        <begin position="3247"/>
        <end position="3552"/>
    </location>
</feature>
<feature type="domain" description="RdRp Nsp7 cofactor" evidence="16">
    <location>
        <begin position="3843"/>
        <end position="3925"/>
    </location>
</feature>
<feature type="domain" description="RdRp Nsp8 cofactor" evidence="17">
    <location>
        <begin position="3926"/>
        <end position="4123"/>
    </location>
</feature>
<feature type="domain" description="Nsp9 ssRNA-binding" evidence="18">
    <location>
        <begin position="4124"/>
        <end position="4236"/>
    </location>
</feature>
<feature type="domain" description="ExoN/MTase coactivator" evidence="19">
    <location>
        <begin position="4237"/>
        <end position="4375"/>
    </location>
</feature>
<feature type="domain" description="NiRAN" evidence="14">
    <location>
        <begin position="4382"/>
        <end position="4636"/>
    </location>
</feature>
<feature type="domain" description="Nsp12 Interface" evidence="34">
    <location>
        <begin position="4641"/>
        <end position="4739"/>
    </location>
</feature>
<feature type="domain" description="Nsp12 RNA-dependent RNA polymerase" evidence="15">
    <location>
        <begin position="4740"/>
        <end position="5307"/>
    </location>
</feature>
<feature type="domain" description="RdRp catalytic" evidence="8">
    <location>
        <begin position="4987"/>
        <end position="5149"/>
    </location>
</feature>
<feature type="domain" description="CV ZBD" evidence="10">
    <location>
        <begin position="5308"/>
        <end position="5420"/>
    </location>
</feature>
<feature type="domain" description="(+)RNA virus helicase ATP-binding">
    <location>
        <begin position="5564"/>
        <end position="5745"/>
    </location>
</feature>
<feature type="domain" description="(+)RNA virus helicase C-terminal">
    <location>
        <begin position="5746"/>
        <end position="5915"/>
    </location>
</feature>
<feature type="domain" description="ExoN" evidence="20">
    <location>
        <begin position="5980"/>
        <end position="6195"/>
    </location>
</feature>
<feature type="domain" description="N7-MTase" evidence="21">
    <location>
        <begin position="6204"/>
        <end position="6435"/>
    </location>
</feature>
<feature type="domain" description="Nsp15 N-terminal oligomerization" evidence="24">
    <location>
        <begin position="6436"/>
        <end position="6496"/>
    </location>
</feature>
<feature type="domain" description="AV-Nsp11N/CoV-Nsp15M" evidence="25">
    <location>
        <begin position="6497"/>
        <end position="6622"/>
    </location>
</feature>
<feature type="domain" description="NendoU" evidence="23">
    <location>
        <begin position="6639"/>
        <end position="6778"/>
    </location>
</feature>
<feature type="domain" description="Nidovirus-type SAM-dependent 2'-O-MTase" evidence="22">
    <location>
        <begin position="6783"/>
        <end position="7077"/>
    </location>
</feature>
<feature type="zinc finger region" description="C4-type" evidence="6">
    <location>
        <begin position="1735"/>
        <end position="1772"/>
    </location>
</feature>
<feature type="zinc finger region" evidence="1">
    <location>
        <begin position="4310"/>
        <end position="4326"/>
    </location>
</feature>
<feature type="zinc finger region" evidence="1">
    <location>
        <begin position="4353"/>
        <end position="4366"/>
    </location>
</feature>
<feature type="region of interest" description="C2H2" evidence="28">
    <location>
        <begin position="200"/>
        <end position="236"/>
    </location>
</feature>
<feature type="region of interest" description="C4" evidence="28">
    <location>
        <begin position="323"/>
        <end position="344"/>
    </location>
</feature>
<feature type="region of interest" description="C2HC" evidence="28">
    <location>
        <begin position="370"/>
        <end position="416"/>
    </location>
</feature>
<feature type="region of interest" description="HD1" evidence="1">
    <location>
        <begin position="2098"/>
        <end position="2377"/>
    </location>
</feature>
<feature type="region of interest" description="Y1" evidence="31">
    <location>
        <begin position="2378"/>
        <end position="2468"/>
    </location>
</feature>
<feature type="region of interest" description="ZF1" evidence="31">
    <location>
        <begin position="2382"/>
        <end position="2395"/>
    </location>
</feature>
<feature type="region of interest" description="ZF2" evidence="31">
    <location>
        <begin position="2428"/>
        <end position="2438"/>
    </location>
</feature>
<feature type="region of interest" description="CoV-Y" evidence="31">
    <location>
        <begin position="2469"/>
        <end position="2746"/>
    </location>
</feature>
<feature type="region of interest" description="Y2" evidence="31">
    <location>
        <begin position="2469"/>
        <end position="2563"/>
    </location>
</feature>
<feature type="region of interest" description="Y3" evidence="31">
    <location>
        <begin position="2564"/>
        <end position="2645"/>
    </location>
</feature>
<feature type="region of interest" description="Y4" evidence="31">
    <location>
        <begin position="2646"/>
        <end position="2746"/>
    </location>
</feature>
<feature type="region of interest" description="HD2" evidence="1">
    <location>
        <begin position="2761"/>
        <end position="3168"/>
    </location>
</feature>
<feature type="region of interest" description="HD3" evidence="1">
    <location>
        <begin position="3570"/>
        <end position="3782"/>
    </location>
</feature>
<feature type="region of interest" description="RdRp Fingers N-ter" evidence="15">
    <location>
        <begin position="4742"/>
        <end position="4956"/>
    </location>
</feature>
<feature type="region of interest" description="RdRp Palm N-ter" evidence="15">
    <location>
        <begin position="4957"/>
        <end position="4995"/>
    </location>
</feature>
<feature type="region of interest" description="RdRp Fingers C-ter" evidence="15">
    <location>
        <begin position="4996"/>
        <end position="5054"/>
    </location>
</feature>
<feature type="region of interest" description="RdRp Palm C-ter" evidence="15">
    <location>
        <begin position="5055"/>
        <end position="5190"/>
    </location>
</feature>
<feature type="region of interest" description="RdRp Thumb" evidence="15">
    <location>
        <begin position="5191"/>
        <end position="5307"/>
    </location>
</feature>
<feature type="region of interest" description="GpppA-binding" evidence="21">
    <location>
        <begin position="6322"/>
        <end position="6336"/>
    </location>
</feature>
<feature type="active site" description="For PL-PRO activity" evidence="6">
    <location>
        <position position="1657"/>
    </location>
</feature>
<feature type="active site" description="For PL-PRO activity" evidence="6">
    <location>
        <position position="1818"/>
    </location>
</feature>
<feature type="active site" description="For PL-PRO activity" evidence="6">
    <location>
        <position position="1832"/>
    </location>
</feature>
<feature type="active site" description="For 3CL-PRO activity" evidence="9">
    <location>
        <position position="3287"/>
    </location>
</feature>
<feature type="active site" description="For 3CL-PRO activity" evidence="9">
    <location>
        <position position="3391"/>
    </location>
</feature>
<feature type="active site" evidence="15">
    <location>
        <position position="5134"/>
    </location>
</feature>
<feature type="active site" evidence="15">
    <location>
        <position position="5135"/>
    </location>
</feature>
<feature type="active site" evidence="15">
    <location>
        <position position="5136"/>
    </location>
</feature>
<feature type="active site" evidence="20">
    <location>
        <position position="5998"/>
    </location>
</feature>
<feature type="active site" evidence="20">
    <location>
        <position position="6000"/>
    </location>
</feature>
<feature type="active site" evidence="20">
    <location>
        <position position="6099"/>
    </location>
</feature>
<feature type="active site" evidence="20">
    <location>
        <position position="6176"/>
    </location>
</feature>
<feature type="active site" evidence="20">
    <location>
        <position position="6181"/>
    </location>
</feature>
<feature type="active site" evidence="23">
    <location>
        <position position="6669"/>
    </location>
</feature>
<feature type="active site" evidence="23">
    <location>
        <position position="6684"/>
    </location>
</feature>
<feature type="active site" evidence="23">
    <location>
        <position position="6724"/>
    </location>
</feature>
<feature type="active site" evidence="22">
    <location>
        <position position="6827"/>
    </location>
</feature>
<feature type="active site" evidence="22">
    <location>
        <position position="6911"/>
    </location>
</feature>
<feature type="active site" evidence="22">
    <location>
        <position position="6951"/>
    </location>
</feature>
<feature type="active site" evidence="22">
    <location>
        <position position="6984"/>
    </location>
</feature>
<feature type="binding site" evidence="28">
    <location>
        <position position="200"/>
    </location>
    <ligand>
        <name>Zn(2+)</name>
        <dbReference type="ChEBI" id="CHEBI:29105"/>
        <label>1</label>
    </ligand>
</feature>
<feature type="binding site" evidence="28">
    <location>
        <position position="231"/>
    </location>
    <ligand>
        <name>Zn(2+)</name>
        <dbReference type="ChEBI" id="CHEBI:29105"/>
        <label>1</label>
    </ligand>
</feature>
<feature type="binding site" evidence="28">
    <location>
        <position position="234"/>
    </location>
    <ligand>
        <name>Zn(2+)</name>
        <dbReference type="ChEBI" id="CHEBI:29105"/>
        <label>1</label>
    </ligand>
</feature>
<feature type="binding site" evidence="28">
    <location>
        <position position="236"/>
    </location>
    <ligand>
        <name>Zn(2+)</name>
        <dbReference type="ChEBI" id="CHEBI:29105"/>
        <label>1</label>
    </ligand>
</feature>
<feature type="binding site" evidence="28">
    <location>
        <position position="323"/>
    </location>
    <ligand>
        <name>Zn(2+)</name>
        <dbReference type="ChEBI" id="CHEBI:29105"/>
        <label>2</label>
    </ligand>
</feature>
<feature type="binding site" evidence="28">
    <location>
        <position position="326"/>
    </location>
    <ligand>
        <name>Zn(2+)</name>
        <dbReference type="ChEBI" id="CHEBI:29105"/>
        <label>2</label>
    </ligand>
</feature>
<feature type="binding site" evidence="28">
    <location>
        <position position="341"/>
    </location>
    <ligand>
        <name>Zn(2+)</name>
        <dbReference type="ChEBI" id="CHEBI:29105"/>
        <label>2</label>
    </ligand>
</feature>
<feature type="binding site" evidence="28">
    <location>
        <position position="344"/>
    </location>
    <ligand>
        <name>Zn(2+)</name>
        <dbReference type="ChEBI" id="CHEBI:29105"/>
        <label>2</label>
    </ligand>
</feature>
<feature type="binding site" evidence="28">
    <location>
        <position position="370"/>
    </location>
    <ligand>
        <name>Zn(2+)</name>
        <dbReference type="ChEBI" id="CHEBI:29105"/>
        <label>3</label>
    </ligand>
</feature>
<feature type="binding site" evidence="28">
    <location>
        <position position="373"/>
    </location>
    <ligand>
        <name>Zn(2+)</name>
        <dbReference type="ChEBI" id="CHEBI:29105"/>
        <label>3</label>
    </ligand>
</feature>
<feature type="binding site" evidence="28">
    <location>
        <position position="382"/>
    </location>
    <ligand>
        <name>Zn(2+)</name>
        <dbReference type="ChEBI" id="CHEBI:29105"/>
        <label>3</label>
    </ligand>
</feature>
<feature type="binding site" evidence="28">
    <location>
        <position position="416"/>
    </location>
    <ligand>
        <name>Zn(2+)</name>
        <dbReference type="ChEBI" id="CHEBI:29105"/>
        <label>3</label>
    </ligand>
</feature>
<feature type="binding site" evidence="6">
    <location>
        <position position="1735"/>
    </location>
    <ligand>
        <name>Zn(2+)</name>
        <dbReference type="ChEBI" id="CHEBI:29105"/>
        <label>4</label>
    </ligand>
</feature>
<feature type="binding site" evidence="6">
    <location>
        <position position="1738"/>
    </location>
    <ligand>
        <name>Zn(2+)</name>
        <dbReference type="ChEBI" id="CHEBI:29105"/>
        <label>4</label>
    </ligand>
</feature>
<feature type="binding site" evidence="6">
    <location>
        <position position="1770"/>
    </location>
    <ligand>
        <name>Zn(2+)</name>
        <dbReference type="ChEBI" id="CHEBI:29105"/>
        <label>4</label>
    </ligand>
</feature>
<feature type="binding site" evidence="6">
    <location>
        <position position="1772"/>
    </location>
    <ligand>
        <name>Zn(2+)</name>
        <dbReference type="ChEBI" id="CHEBI:29105"/>
        <label>4</label>
    </ligand>
</feature>
<feature type="binding site" evidence="31">
    <location>
        <position position="2382"/>
    </location>
    <ligand>
        <name>Zn(2+)</name>
        <dbReference type="ChEBI" id="CHEBI:29105"/>
        <label>5</label>
    </ligand>
</feature>
<feature type="binding site" evidence="31">
    <location>
        <position position="2387"/>
    </location>
    <ligand>
        <name>Zn(2+)</name>
        <dbReference type="ChEBI" id="CHEBI:29105"/>
        <label>5</label>
    </ligand>
</feature>
<feature type="binding site" evidence="31">
    <location>
        <position position="2392"/>
    </location>
    <ligand>
        <name>Zn(2+)</name>
        <dbReference type="ChEBI" id="CHEBI:29105"/>
        <label>5</label>
    </ligand>
</feature>
<feature type="binding site" evidence="31">
    <location>
        <position position="2395"/>
    </location>
    <ligand>
        <name>Zn(2+)</name>
        <dbReference type="ChEBI" id="CHEBI:29105"/>
        <label>5</label>
    </ligand>
</feature>
<feature type="binding site" evidence="31">
    <location>
        <position position="2428"/>
    </location>
    <ligand>
        <name>Zn(2+)</name>
        <dbReference type="ChEBI" id="CHEBI:29105"/>
        <label>6</label>
    </ligand>
</feature>
<feature type="binding site" evidence="31">
    <location>
        <position position="2431"/>
    </location>
    <ligand>
        <name>Zn(2+)</name>
        <dbReference type="ChEBI" id="CHEBI:29105"/>
        <label>6</label>
    </ligand>
</feature>
<feature type="binding site" evidence="31">
    <location>
        <position position="2435"/>
    </location>
    <ligand>
        <name>Zn(2+)</name>
        <dbReference type="ChEBI" id="CHEBI:29105"/>
        <label>6</label>
    </ligand>
</feature>
<feature type="binding site" evidence="31">
    <location>
        <position position="2438"/>
    </location>
    <ligand>
        <name>Zn(2+)</name>
        <dbReference type="ChEBI" id="CHEBI:29105"/>
        <label>6</label>
    </ligand>
</feature>
<feature type="binding site" evidence="19">
    <location>
        <position position="4310"/>
    </location>
    <ligand>
        <name>Zn(2+)</name>
        <dbReference type="ChEBI" id="CHEBI:29105"/>
        <label>7</label>
    </ligand>
</feature>
<feature type="binding site" evidence="19">
    <location>
        <position position="4313"/>
    </location>
    <ligand>
        <name>Zn(2+)</name>
        <dbReference type="ChEBI" id="CHEBI:29105"/>
        <label>7</label>
    </ligand>
</feature>
<feature type="binding site" evidence="19">
    <location>
        <position position="4319"/>
    </location>
    <ligand>
        <name>Zn(2+)</name>
        <dbReference type="ChEBI" id="CHEBI:29105"/>
        <label>7</label>
    </ligand>
</feature>
<feature type="binding site" evidence="19">
    <location>
        <position position="4326"/>
    </location>
    <ligand>
        <name>Zn(2+)</name>
        <dbReference type="ChEBI" id="CHEBI:29105"/>
        <label>7</label>
    </ligand>
</feature>
<feature type="binding site" evidence="19">
    <location>
        <position position="4353"/>
    </location>
    <ligand>
        <name>Zn(2+)</name>
        <dbReference type="ChEBI" id="CHEBI:29105"/>
        <label>8</label>
    </ligand>
</feature>
<feature type="binding site" evidence="19">
    <location>
        <position position="4356"/>
    </location>
    <ligand>
        <name>Zn(2+)</name>
        <dbReference type="ChEBI" id="CHEBI:29105"/>
        <label>8</label>
    </ligand>
</feature>
<feature type="binding site" evidence="19">
    <location>
        <position position="4364"/>
    </location>
    <ligand>
        <name>Zn(2+)</name>
        <dbReference type="ChEBI" id="CHEBI:29105"/>
        <label>8</label>
    </ligand>
</feature>
<feature type="binding site" evidence="19">
    <location>
        <position position="4366"/>
    </location>
    <ligand>
        <name>Zn(2+)</name>
        <dbReference type="ChEBI" id="CHEBI:29105"/>
        <label>8</label>
    </ligand>
</feature>
<feature type="binding site" evidence="3">
    <location>
        <position position="4584"/>
    </location>
    <ligand>
        <name>Mn(2+)</name>
        <dbReference type="ChEBI" id="CHEBI:29035"/>
    </ligand>
</feature>
<feature type="binding site" evidence="3">
    <location>
        <position position="4593"/>
    </location>
    <ligand>
        <name>Mn(2+)</name>
        <dbReference type="ChEBI" id="CHEBI:29035"/>
    </ligand>
</feature>
<feature type="binding site" evidence="34">
    <location>
        <position position="4670"/>
    </location>
    <ligand>
        <name>Zn(2+)</name>
        <dbReference type="ChEBI" id="CHEBI:29105"/>
        <label>9</label>
    </ligand>
</feature>
<feature type="binding site" evidence="34">
    <location>
        <position position="4676"/>
    </location>
    <ligand>
        <name>Zn(2+)</name>
        <dbReference type="ChEBI" id="CHEBI:29105"/>
        <label>9</label>
    </ligand>
</feature>
<feature type="binding site" evidence="34">
    <location>
        <position position="4681"/>
    </location>
    <ligand>
        <name>Zn(2+)</name>
        <dbReference type="ChEBI" id="CHEBI:29105"/>
        <label>9</label>
    </ligand>
</feature>
<feature type="binding site" evidence="34">
    <location>
        <position position="4685"/>
    </location>
    <ligand>
        <name>Zn(2+)</name>
        <dbReference type="ChEBI" id="CHEBI:29105"/>
        <label>9</label>
    </ligand>
</feature>
<feature type="binding site" evidence="15">
    <location>
        <position position="4862"/>
    </location>
    <ligand>
        <name>Zn(2+)</name>
        <dbReference type="ChEBI" id="CHEBI:29105"/>
        <label>10</label>
    </ligand>
</feature>
<feature type="binding site" evidence="15">
    <location>
        <position position="5017"/>
    </location>
    <ligand>
        <name>Zn(2+)</name>
        <dbReference type="ChEBI" id="CHEBI:29105"/>
        <label>10</label>
    </ligand>
</feature>
<feature type="binding site" evidence="15">
    <location>
        <position position="5020"/>
    </location>
    <ligand>
        <name>Zn(2+)</name>
        <dbReference type="ChEBI" id="CHEBI:29105"/>
        <label>10</label>
    </ligand>
</feature>
<feature type="binding site" evidence="15">
    <location>
        <position position="5021"/>
    </location>
    <ligand>
        <name>Zn(2+)</name>
        <dbReference type="ChEBI" id="CHEBI:29105"/>
        <label>10</label>
    </ligand>
</feature>
<feature type="binding site" evidence="10">
    <location>
        <position position="5312"/>
    </location>
    <ligand>
        <name>Zn(2+)</name>
        <dbReference type="ChEBI" id="CHEBI:29105"/>
        <label>11</label>
    </ligand>
</feature>
<feature type="binding site" evidence="10">
    <location>
        <position position="5315"/>
    </location>
    <ligand>
        <name>Zn(2+)</name>
        <dbReference type="ChEBI" id="CHEBI:29105"/>
        <label>11</label>
    </ligand>
</feature>
<feature type="binding site" evidence="10">
    <location>
        <position position="5323"/>
    </location>
    <ligand>
        <name>Zn(2+)</name>
        <dbReference type="ChEBI" id="CHEBI:29105"/>
        <label>12</label>
    </ligand>
</feature>
<feature type="binding site" evidence="10">
    <location>
        <position position="5326"/>
    </location>
    <ligand>
        <name>Zn(2+)</name>
        <dbReference type="ChEBI" id="CHEBI:29105"/>
        <label>12</label>
    </ligand>
</feature>
<feature type="binding site" evidence="10">
    <location>
        <position position="5333"/>
    </location>
    <ligand>
        <name>Zn(2+)</name>
        <dbReference type="ChEBI" id="CHEBI:29105"/>
        <label>11</label>
    </ligand>
</feature>
<feature type="binding site" evidence="10">
    <location>
        <position position="5336"/>
    </location>
    <ligand>
        <name>Zn(2+)</name>
        <dbReference type="ChEBI" id="CHEBI:29105"/>
        <label>11</label>
    </ligand>
</feature>
<feature type="binding site" evidence="10">
    <location>
        <position position="5340"/>
    </location>
    <ligand>
        <name>Zn(2+)</name>
        <dbReference type="ChEBI" id="CHEBI:29105"/>
        <label>12</label>
    </ligand>
</feature>
<feature type="binding site" evidence="10">
    <location>
        <position position="5346"/>
    </location>
    <ligand>
        <name>Zn(2+)</name>
        <dbReference type="ChEBI" id="CHEBI:29105"/>
        <label>12</label>
    </ligand>
</feature>
<feature type="binding site" evidence="10">
    <location>
        <position position="5357"/>
    </location>
    <ligand>
        <name>Zn(2+)</name>
        <dbReference type="ChEBI" id="CHEBI:29105"/>
        <label>13</label>
    </ligand>
</feature>
<feature type="binding site" evidence="10">
    <location>
        <position position="5362"/>
    </location>
    <ligand>
        <name>Zn(2+)</name>
        <dbReference type="ChEBI" id="CHEBI:29105"/>
        <label>13</label>
    </ligand>
</feature>
<feature type="binding site" evidence="10">
    <location>
        <position position="5379"/>
    </location>
    <ligand>
        <name>Zn(2+)</name>
        <dbReference type="ChEBI" id="CHEBI:29105"/>
        <label>13</label>
    </ligand>
</feature>
<feature type="binding site" evidence="10">
    <location>
        <position position="5382"/>
    </location>
    <ligand>
        <name>Zn(2+)</name>
        <dbReference type="ChEBI" id="CHEBI:29105"/>
        <label>13</label>
    </ligand>
</feature>
<feature type="binding site" evidence="1">
    <location>
        <begin position="5589"/>
        <end position="5596"/>
    </location>
    <ligand>
        <name>ATP</name>
        <dbReference type="ChEBI" id="CHEBI:30616"/>
    </ligand>
</feature>
<feature type="binding site" evidence="20">
    <location>
        <position position="6115"/>
    </location>
    <ligand>
        <name>Zn(2+)</name>
        <dbReference type="ChEBI" id="CHEBI:29105"/>
        <label>14</label>
    </ligand>
</feature>
<feature type="binding site" evidence="20">
    <location>
        <position position="6118"/>
    </location>
    <ligand>
        <name>Zn(2+)</name>
        <dbReference type="ChEBI" id="CHEBI:29105"/>
        <label>14</label>
    </ligand>
</feature>
<feature type="binding site" evidence="20">
    <location>
        <position position="6134"/>
    </location>
    <ligand>
        <name>Zn(2+)</name>
        <dbReference type="ChEBI" id="CHEBI:29105"/>
        <label>14</label>
    </ligand>
</feature>
<feature type="binding site" evidence="20">
    <location>
        <position position="6137"/>
    </location>
    <ligand>
        <name>Zn(2+)</name>
        <dbReference type="ChEBI" id="CHEBI:29105"/>
        <label>14</label>
    </ligand>
</feature>
<feature type="binding site" evidence="20">
    <location>
        <position position="6165"/>
    </location>
    <ligand>
        <name>Zn(2+)</name>
        <dbReference type="ChEBI" id="CHEBI:29105"/>
        <label>15</label>
    </ligand>
</feature>
<feature type="binding site" evidence="20">
    <location>
        <position position="6169"/>
    </location>
    <ligand>
        <name>Zn(2+)</name>
        <dbReference type="ChEBI" id="CHEBI:29105"/>
        <label>15</label>
    </ligand>
</feature>
<feature type="binding site" evidence="20">
    <location>
        <position position="6172"/>
    </location>
    <ligand>
        <name>Zn(2+)</name>
        <dbReference type="ChEBI" id="CHEBI:29105"/>
        <label>15</label>
    </ligand>
</feature>
<feature type="binding site" evidence="20">
    <location>
        <position position="6187"/>
    </location>
    <ligand>
        <name>Zn(2+)</name>
        <dbReference type="ChEBI" id="CHEBI:29105"/>
        <label>15</label>
    </ligand>
</feature>
<feature type="binding site" evidence="21">
    <location>
        <begin position="6239"/>
        <end position="6245"/>
    </location>
    <ligand>
        <name>S-adenosyl-L-methionine</name>
        <dbReference type="ChEBI" id="CHEBI:59789"/>
    </ligand>
</feature>
<feature type="binding site" evidence="21">
    <location>
        <position position="6360"/>
    </location>
    <ligand>
        <name>Zn(2+)</name>
        <dbReference type="ChEBI" id="CHEBI:29105"/>
        <label>16</label>
    </ligand>
</feature>
<feature type="binding site" evidence="21">
    <location>
        <position position="6381"/>
    </location>
    <ligand>
        <name>Zn(2+)</name>
        <dbReference type="ChEBI" id="CHEBI:29105"/>
        <label>16</label>
    </ligand>
</feature>
<feature type="binding site" evidence="21">
    <location>
        <position position="6392"/>
    </location>
    <ligand>
        <name>Zn(2+)</name>
        <dbReference type="ChEBI" id="CHEBI:29105"/>
        <label>16</label>
    </ligand>
</feature>
<feature type="binding site" evidence="21">
    <location>
        <position position="6395"/>
    </location>
    <ligand>
        <name>Zn(2+)</name>
        <dbReference type="ChEBI" id="CHEBI:29105"/>
        <label>16</label>
    </ligand>
</feature>
<feature type="site" description="Cleavage" evidence="1">
    <location>
        <begin position="179"/>
        <end position="180"/>
    </location>
</feature>
<feature type="site" description="Cleavage; by PL-PRO" evidence="1">
    <location>
        <begin position="818"/>
        <end position="819"/>
    </location>
</feature>
<feature type="site" description="Cleavage; by PL-PRO" evidence="1">
    <location>
        <begin position="3246"/>
        <end position="3247"/>
    </location>
</feature>
<feature type="site" description="Cleavage; by 3CL-PRO" evidence="1">
    <location>
        <begin position="3552"/>
        <end position="3553"/>
    </location>
</feature>
<feature type="site" description="Cleavage; by 3CL-PRO" evidence="1">
    <location>
        <begin position="3842"/>
        <end position="3843"/>
    </location>
</feature>
<feature type="site" description="Cleavage; by 3CL-PRO" evidence="1">
    <location>
        <begin position="3925"/>
        <end position="3926"/>
    </location>
</feature>
<feature type="site" description="Cleavage; by 3CL-PRO" evidence="1">
    <location>
        <begin position="4123"/>
        <end position="4124"/>
    </location>
</feature>
<feature type="site" description="Cleavage; by 3CL-PRO" evidence="1">
    <location>
        <begin position="4236"/>
        <end position="4237"/>
    </location>
</feature>
<feature type="site" description="Cleavage; by 3CL-PRO" evidence="1">
    <location>
        <begin position="4375"/>
        <end position="4376"/>
    </location>
</feature>
<feature type="site" description="Cleavage; by 3CL-PRO" evidence="1">
    <location>
        <begin position="5307"/>
        <end position="5308"/>
    </location>
</feature>
<feature type="site" description="Cleavage; by 3CL-PRO" evidence="1">
    <location>
        <begin position="5908"/>
        <end position="5909"/>
    </location>
</feature>
<feature type="site" description="Cleavage; by 3CL-PRO" evidence="1">
    <location>
        <begin position="6435"/>
        <end position="6436"/>
    </location>
</feature>
<feature type="site" description="Cleavage; by 3CL-PRO" evidence="1">
    <location>
        <begin position="6781"/>
        <end position="6782"/>
    </location>
</feature>
<feature type="disulfide bond" evidence="32">
    <location>
        <begin position="2246"/>
        <end position="2274"/>
    </location>
</feature>
<feature type="disulfide bond" evidence="32">
    <location>
        <begin position="2265"/>
        <end position="2271"/>
    </location>
</feature>
<comment type="function">
    <text evidence="2">The replicase polyprotein of coronaviruses is a multifunctional protein: it contains the activities necessary for the transcription of negative stranded RNA, leader RNA, subgenomic mRNAs and progeny virion RNA as well as proteinases responsible for the cleavage of the polyprotein into functional products.</text>
</comment>
<comment type="function">
    <molecule>Host translation inhibitor nsp1</molecule>
    <text evidence="2">Inhibits host translation by interacting with the 40S ribosomal subunit. The nsp1-40S ribosome complex further induces an endonucleolytic cleavage near the 5'UTR of host mRNAs, targeting them for degradation. Viral mRNAs are not susceptible to nsp1-mediated endonucleolytic RNA cleavage thanks to the presence of a 5'-end leader sequence and are therefore protected from degradation. By suppressing host gene expression, nsp1 facilitates efficient viral gene expression in infected cells and evasion from host immune response.</text>
</comment>
<comment type="function">
    <molecule>Non-structural protein 2</molecule>
    <text evidence="2">May play a role in the modulation of host cell survival signaling pathway by interacting with host PHB and PHB2. Indeed, these two proteins play a role in maintaining the functional integrity of the mitochondria and protecting cells from various stresses.</text>
</comment>
<comment type="function">
    <molecule>Papain-like proteinase nsp3</molecule>
    <text evidence="2">Responsible for the cleavages located at the N-terminus of the replicase polyprotein. In addition, PL-PRO possesses a deubiquitinating/deISGylating activity and processes both 'Lys-48'- and 'Lys-63'-linked polyubiquitin chains from cellular substrates. Participates together with nsp4 in the assembly of virally-induced cytoplasmic double-membrane vesicles necessary for viral replication. Antagonizes innate immune induction of type I interferon by blocking the phosphorylation, dimerization and subsequent nuclear translocation of host IRF3. Also prevents host NF-kappa-B signaling.</text>
</comment>
<comment type="function">
    <molecule>Non-structural protein 4</molecule>
    <text evidence="2">Participates in the assembly of virally-induced cytoplasmic double-membrane vesicles necessary for viral replication.</text>
</comment>
<comment type="function">
    <molecule>3C-like proteinase nsp5</molecule>
    <text evidence="2 9">Cleaves the C-terminus of replicase polyprotein at 11 sites. Recognizes substrates containing the core sequence [ILMVF]-Q-|-[SGACN]. Also able to bind an ADP-ribose-1''-phosphate (ADRP).</text>
</comment>
<comment type="function">
    <molecule>Non-structural protein 6</molecule>
    <text evidence="2">Plays a role in the initial induction of autophagosomes from host endoplasmic reticulum. Later, limits the expansion of these phagosomes that are no longer able to deliver viral components to lysosomes.</text>
</comment>
<comment type="function">
    <molecule>Non-structural protein 7</molecule>
    <text evidence="2">Forms a hexadecamer with nsp8 (8 subunits of each) that may participate in viral replication by acting as a primase. Alternatively, may synthesize substantially longer products than oligonucleotide primers.</text>
</comment>
<comment type="function">
    <molecule>Non-structural protein 8</molecule>
    <text evidence="2">Forms a hexadecamer with nsp7 (8 subunits of each) that may participate in viral replication by acting as a primase. Alternatively, may synthesize substantially longer products than oligonucleotide primers.</text>
</comment>
<comment type="function">
    <molecule>Viral protein genome-linked nsp9</molecule>
    <text evidence="3">Forms a primer, NSP9-pU, which is utilized by the polymerase for the initiation of RNA chains. Interacts with ribosome signal recognition particle RNA (SRP). Together with NSP8, suppress protein integration into the cell membrane, thereby disrupting host immune defenses.</text>
</comment>
<comment type="function">
    <molecule>Non-structural protein 10</molecule>
    <text evidence="2">Plays a pivotal role in viral transcription by stimulating both nsp14 3'-5' exoribonuclease and nsp16 2'-O-methyltransferase activities. Therefore plays an essential role in viral mRNAs cap methylation.</text>
</comment>
<comment type="function">
    <molecule>RNA-directed RNA polymerase nsp12</molecule>
    <text evidence="3">RNA-directed RNA polymerase that catalyzes the transcription of viral genomic and subgenomic RNAs. Acts in complex with nsp7 and nsp8 to transcribe both the minus and positive strands of genomic RNA. The kinase-like NiRAN domain of NSP12 attaches one or more nucleotides to the amino terminus of NSP9, forming a covalent RNA-protein intermediate that serves as transcription/replication primer. Subgenomic RNAs (sgRNAs) are formed by discontinuous transcription: The polymerase has the ability to pause at transcription-regulating sequences (TRS) and jump to the leader TRS, resulting in a major deletion. This creates a series of subgenomic RNAs that are replicated, transcribed and translated. In addition, Nsp12 is a subunit of the viral RNA capping enzyme that catalyzes the RNA guanylyltransferase reaction for genomic and sub-genomic RNAs. Subsequently, the NiRAN domain transfers RNA to GDP, and forms the core cap structure GpppA-RNA.</text>
</comment>
<comment type="function">
    <molecule>Helicase nsp13</molecule>
    <text evidence="2">Multi-functional protein with a zinc-binding domain in N-terminus displaying RNA and DNA duplex-unwinding activities with 5' to 3' polarity. Activity of helicase is dependent on magnesium.</text>
</comment>
<comment type="function">
    <molecule>Guanine-N7 methyltransferase nsp14</molecule>
    <text evidence="2">Plays a role in viral RNA synthesis through two distinct activities. The N7-guanine methyltransferase activity plays a role in the formation of the cap structure GpppA-RNA. The proofreading exoribonuclease reduces the sensitivity of the virus to RNA mutagens during replication. This activity acts on both ssRNA and dsRNA in a 3'-5' direction.</text>
</comment>
<comment type="function">
    <molecule>Uridylate-specific endoribonuclease nsp15</molecule>
    <text evidence="2">Plays a role in viral transcription/replication and prevents the simultaneous activation of host cell dsRNA sensors, such as MDA5/IFIH1, OAS, and PKR (By similarity). Acts by degrading the 5'-polyuridines generated during replication of the poly(A) region of viral genomic and subgenomic RNAs. Catalyzes a two-step reaction in which a 2'3'-cyclic phosphate (2'3'-cP) is first generated by 2'-O transesterification, which is then hydrolyzed to a 3'-phosphate (3'-P) (By similarity). If not degraded, poly(U) RNA would hybridize with poly(A) RNA tails and activate host dsRNA sensors (By similarity).</text>
</comment>
<comment type="function">
    <molecule>2'-O-methyltransferase nsp16</molecule>
    <text evidence="2">Methyltransferase that mediates mRNA cap 2'-O-ribose methylation to the 5'-cap structure of viral mRNAs. N7-methyl guanosine cap is a prerequisite for binding of nsp16. Therefore plays an essential role in viral mRNAs cap methylation which is essential to evade immune system.</text>
</comment>
<comment type="catalytic activity">
    <molecule>RNA-directed RNA polymerase nsp12</molecule>
    <reaction evidence="8">
        <text>RNA(n) + a ribonucleoside 5'-triphosphate = RNA(n+1) + diphosphate</text>
        <dbReference type="Rhea" id="RHEA:21248"/>
        <dbReference type="Rhea" id="RHEA-COMP:14527"/>
        <dbReference type="Rhea" id="RHEA-COMP:17342"/>
        <dbReference type="ChEBI" id="CHEBI:33019"/>
        <dbReference type="ChEBI" id="CHEBI:61557"/>
        <dbReference type="ChEBI" id="CHEBI:140395"/>
        <dbReference type="EC" id="2.7.7.48"/>
    </reaction>
</comment>
<comment type="catalytic activity">
    <molecule>Helicase nsp13</molecule>
    <reaction>
        <text>ATP + H2O = ADP + phosphate + H(+)</text>
        <dbReference type="Rhea" id="RHEA:13065"/>
        <dbReference type="ChEBI" id="CHEBI:15377"/>
        <dbReference type="ChEBI" id="CHEBI:15378"/>
        <dbReference type="ChEBI" id="CHEBI:30616"/>
        <dbReference type="ChEBI" id="CHEBI:43474"/>
        <dbReference type="ChEBI" id="CHEBI:456216"/>
        <dbReference type="EC" id="3.6.4.12"/>
    </reaction>
</comment>
<comment type="catalytic activity">
    <molecule>Helicase nsp13</molecule>
    <reaction>
        <text>ATP + H2O = ADP + phosphate + H(+)</text>
        <dbReference type="Rhea" id="RHEA:13065"/>
        <dbReference type="ChEBI" id="CHEBI:15377"/>
        <dbReference type="ChEBI" id="CHEBI:15378"/>
        <dbReference type="ChEBI" id="CHEBI:30616"/>
        <dbReference type="ChEBI" id="CHEBI:43474"/>
        <dbReference type="ChEBI" id="CHEBI:456216"/>
        <dbReference type="EC" id="3.6.4.13"/>
    </reaction>
</comment>
<comment type="catalytic activity">
    <molecule>Papain-like proteinase nsp3</molecule>
    <reaction>
        <text>Thiol-dependent hydrolysis of ester, thioester, amide, peptide and isopeptide bonds formed by the C-terminal Gly of ubiquitin (a 76-residue protein attached to proteins as an intracellular targeting signal).</text>
        <dbReference type="EC" id="3.4.19.12"/>
    </reaction>
</comment>
<comment type="catalytic activity">
    <molecule>2'-O-methyltransferase nsp16</molecule>
    <reaction evidence="2">
        <text>a 5'-end (N(7)-methyl 5'-triphosphoguanosine)-ribonucleoside in mRNA + S-adenosyl-L-methionine = a 5'-end (N(7)-methyl 5'-triphosphoguanosine)-(2'-O-methyl-ribonucleoside) in mRNA + S-adenosyl-L-homocysteine + H(+)</text>
        <dbReference type="Rhea" id="RHEA:67020"/>
        <dbReference type="Rhea" id="RHEA-COMP:17167"/>
        <dbReference type="Rhea" id="RHEA-COMP:17168"/>
        <dbReference type="ChEBI" id="CHEBI:15378"/>
        <dbReference type="ChEBI" id="CHEBI:57856"/>
        <dbReference type="ChEBI" id="CHEBI:59789"/>
        <dbReference type="ChEBI" id="CHEBI:156461"/>
        <dbReference type="ChEBI" id="CHEBI:167609"/>
        <dbReference type="EC" id="2.1.1.57"/>
    </reaction>
</comment>
<comment type="catalytic activity">
    <molecule>Uridylate-specific endoribonuclease nsp15</molecule>
    <reaction evidence="2">
        <text>uridylyl-uridylyl-ribonucleotide-RNA = a 3'-end uridylyl-2',3'-cyclophospho-uridine-RNA + a 5'-end dephospho-ribonucleoside-RNA</text>
        <dbReference type="Rhea" id="RHEA:67732"/>
        <dbReference type="Rhea" id="RHEA-COMP:13936"/>
        <dbReference type="Rhea" id="RHEA-COMP:17334"/>
        <dbReference type="Rhea" id="RHEA-COMP:17335"/>
        <dbReference type="ChEBI" id="CHEBI:138284"/>
        <dbReference type="ChEBI" id="CHEBI:173079"/>
        <dbReference type="ChEBI" id="CHEBI:173080"/>
    </reaction>
</comment>
<comment type="catalytic activity">
    <molecule>RNA-directed RNA polymerase nsp12</molecule>
    <reaction evidence="3">
        <text>a 5'-end diphospho-ribonucleoside in mRNA + GTP + H(+) = a 5'-end (5'-triphosphoguanosine)-ribonucleoside in mRNA + diphosphate</text>
        <dbReference type="Rhea" id="RHEA:67012"/>
        <dbReference type="Rhea" id="RHEA-COMP:17165"/>
        <dbReference type="Rhea" id="RHEA-COMP:17166"/>
        <dbReference type="ChEBI" id="CHEBI:15378"/>
        <dbReference type="ChEBI" id="CHEBI:33019"/>
        <dbReference type="ChEBI" id="CHEBI:37565"/>
        <dbReference type="ChEBI" id="CHEBI:167616"/>
        <dbReference type="ChEBI" id="CHEBI:167617"/>
        <dbReference type="EC" id="2.7.7.50"/>
    </reaction>
    <physiologicalReaction direction="left-to-right" evidence="3">
        <dbReference type="Rhea" id="RHEA:67013"/>
    </physiologicalReaction>
</comment>
<comment type="catalytic activity">
    <molecule>Guanine-N7 methyltransferase nsp14</molecule>
    <reaction evidence="2">
        <text>a 5'-end (5'-triphosphoguanosine)-ribonucleoside in mRNA + S-adenosyl-L-methionine = a 5'-end (N(7)-methyl 5'-triphosphoguanosine)-ribonucleoside in mRNA + S-adenosyl-L-homocysteine</text>
        <dbReference type="Rhea" id="RHEA:67008"/>
        <dbReference type="Rhea" id="RHEA-COMP:17166"/>
        <dbReference type="Rhea" id="RHEA-COMP:17167"/>
        <dbReference type="ChEBI" id="CHEBI:57856"/>
        <dbReference type="ChEBI" id="CHEBI:59789"/>
        <dbReference type="ChEBI" id="CHEBI:156461"/>
        <dbReference type="ChEBI" id="CHEBI:167617"/>
        <dbReference type="EC" id="2.1.1.56"/>
    </reaction>
    <physiologicalReaction direction="left-to-right" evidence="2">
        <dbReference type="Rhea" id="RHEA:67009"/>
    </physiologicalReaction>
</comment>
<comment type="cofactor">
    <molecule>Uridylate-specific endoribonuclease nsp15</molecule>
    <cofactor evidence="2">
        <name>Mn(2+)</name>
        <dbReference type="ChEBI" id="CHEBI:29035"/>
    </cofactor>
    <text evidence="2">Likely affects Nsp15 binding to RNA.</text>
</comment>
<comment type="cofactor">
    <molecule>RNA-directed RNA polymerase nsp12</molecule>
    <cofactor evidence="3">
        <name>Mg(2+)</name>
        <dbReference type="ChEBI" id="CHEBI:18420"/>
    </cofactor>
</comment>
<comment type="subunit">
    <molecule>Non-structural protein 2</molecule>
    <text evidence="2">Interacts with host PHB and PHB2.</text>
</comment>
<comment type="subunit">
    <molecule>Non-structural protein 4</molecule>
    <text evidence="2">Interacts with papain-like protease nsp3 and non-structural protein 6.</text>
</comment>
<comment type="subunit">
    <molecule>3C-like proteinase nsp5</molecule>
    <text evidence="2">Monomer. Homodimer. Only the homodimer shows catalytic activity.</text>
</comment>
<comment type="subunit">
    <molecule>Non-structural protein 7</molecule>
    <text evidence="3">Interacts with nsp8 and nsp12 to form the replication-transcription complex (RTC): nsp12, nsp7, two subunits of nsp8, and up to two subunits of nsp13.</text>
</comment>
<comment type="subunit">
    <molecule>Non-structural protein 8</molecule>
    <text evidence="3">Interacts with nsp7, nsp13 and nsp12 to form the replication-transcription complex (RTC): nsp12, nsp7, two subunits of nsp8, and up to two subunits of nsp13.</text>
</comment>
<comment type="subunit">
    <molecule>Viral protein genome-linked nsp9</molecule>
    <text evidence="3">Interacts with nsp12.</text>
</comment>
<comment type="subunit">
    <molecule>Non-structural protein 10</molecule>
    <text evidence="3">Interacts with proofreading exoribonuclease nsp14 and 2'-O-methyltransferase nsp16; these interactions enhance nsp14 and nsp16 enzymatic activities.</text>
</comment>
<comment type="subunit">
    <molecule>RNA-directed RNA polymerase nsp12</molecule>
    <text evidence="3">Interacts with nsp7 and nsp8 to form the replication-transcription complex (RTC): nsp12, nsp7, two subunits of nsp8, and up to two subunits of nsp13. Interacts with nsp9.</text>
</comment>
<comment type="subunit">
    <molecule>Helicase nsp13</molecule>
    <text evidence="3">Interacts with nsp8 to form the replication-transcription complex (RTC): nsp12, nsp7, two subunits of nsp8, and up to two subunits of nsp13.</text>
</comment>
<comment type="subcellular location">
    <molecule>Papain-like proteinase nsp3</molecule>
    <subcellularLocation>
        <location>Host membrane</location>
        <topology>Multi-pass membrane protein</topology>
    </subcellularLocation>
    <subcellularLocation>
        <location evidence="2">Host cytoplasm</location>
    </subcellularLocation>
</comment>
<comment type="subcellular location">
    <molecule>Non-structural protein 4</molecule>
    <subcellularLocation>
        <location>Host membrane</location>
        <topology>Multi-pass membrane protein</topology>
    </subcellularLocation>
    <subcellularLocation>
        <location>Host cytoplasm</location>
    </subcellularLocation>
    <text evidence="2">Localizes in virally-induced cytoplasmic double-membrane vesicles.</text>
</comment>
<comment type="subcellular location">
    <molecule>Non-structural protein 6</molecule>
    <subcellularLocation>
        <location evidence="35">Host membrane</location>
        <topology evidence="35">Multi-pass membrane protein</topology>
    </subcellularLocation>
</comment>
<comment type="subcellular location">
    <molecule>Non-structural protein 7</molecule>
    <subcellularLocation>
        <location evidence="1">Host cytoplasm</location>
        <location evidence="1">Host perinuclear region</location>
    </subcellularLocation>
    <text evidence="1">nsp7, nsp8, nsp9 and nsp10 are localized in cytoplasmic foci, largely perinuclear. Late in infection, they merge into confluent complexes (By similarity).</text>
</comment>
<comment type="subcellular location">
    <molecule>Non-structural protein 8</molecule>
    <subcellularLocation>
        <location evidence="1">Host cytoplasm</location>
        <location evidence="1">Host perinuclear region</location>
    </subcellularLocation>
    <text evidence="1">nsp7, nsp8, nsp9 and nsp10 are localized in cytoplasmic foci, largely perinuclear. Late in infection, they merge into confluent complexes (By similarity).</text>
</comment>
<comment type="subcellular location">
    <molecule>Viral protein genome-linked nsp9</molecule>
    <subcellularLocation>
        <location evidence="1">Host cytoplasm</location>
        <location evidence="1">Host perinuclear region</location>
    </subcellularLocation>
    <text evidence="1">nsp7, nsp8, nsp9 and nsp10 are localized in cytoplasmic foci, largely perinuclear. Late in infection, they merge into confluent complexes (By similarity).</text>
</comment>
<comment type="subcellular location">
    <molecule>Non-structural protein 10</molecule>
    <subcellularLocation>
        <location evidence="1">Host cytoplasm</location>
        <location evidence="1">Host perinuclear region</location>
    </subcellularLocation>
    <text evidence="1">nsp7, nsp8, nsp9 and nsp10 are localized in cytoplasmic foci, largely perinuclear. Late in infection, they merge into confluent complexes (By similarity).</text>
</comment>
<comment type="subcellular location">
    <molecule>Helicase nsp13</molecule>
    <subcellularLocation>
        <location evidence="35">Host endoplasmic reticulum-Golgi intermediate compartment</location>
    </subcellularLocation>
    <text evidence="1">The helicase interacts with the N protein in membranous complexes and colocalizes with sites of synthesis of new viral RNA.</text>
</comment>
<comment type="subcellular location">
    <molecule>Uridylate-specific endoribonuclease nsp15</molecule>
    <subcellularLocation>
        <location evidence="1">Host cytoplasm</location>
        <location evidence="1">Host perinuclear region</location>
    </subcellularLocation>
</comment>
<comment type="alternative products">
    <event type="ribosomal frameshifting"/>
    <isoform>
        <id>P0C6V9-1</id>
        <name>Replicase polyprotein 1ab</name>
        <name>pp1ab</name>
        <sequence type="displayed"/>
    </isoform>
    <isoform>
        <id>P0C6F5-1</id>
        <name>Replicase polyprotein 1a</name>
        <name>pp1a</name>
        <name>ORF1a polyprotein</name>
        <sequence type="external"/>
    </isoform>
</comment>
<comment type="domain">
    <text evidence="1">The hydrophobic domains (HD) could mediate the membrane association of the replication complex and thereby alter the architecture of the host cell membrane.</text>
</comment>
<comment type="PTM">
    <text evidence="1">Specific enzymatic cleavages in vivo by its own proteases yield mature proteins. 3CL-PRO and PL-PRO proteinases are autocatalytically processed (By similarity).</text>
</comment>
<comment type="miscellaneous">
    <text>Bat coronavirus 279/2005 is highly similar to SARS-CoV (SARS-like).</text>
</comment>
<comment type="miscellaneous">
    <molecule>Isoform Replicase polyprotein 1ab</molecule>
    <text>Produced by -1 ribosomal frameshifting at the 1a-1b genes boundary.</text>
</comment>
<comment type="similarity">
    <text evidence="35">Belongs to the coronaviruses polyprotein 1ab family.</text>
</comment>
<comment type="sequence caution" evidence="35">
    <conflict type="erroneous initiation">
        <sequence resource="EMBL-CDS" id="ABG47068"/>
    </conflict>
</comment>
<gene>
    <name type="primary">rep</name>
    <name type="ORF">1a-1b</name>
</gene>